<dbReference type="EMBL" id="U33760">
    <property type="protein sequence ID" value="AAC50241.1"/>
    <property type="molecule type" value="mRNA"/>
</dbReference>
<dbReference type="EMBL" id="Z47087">
    <property type="protein sequence ID" value="CAA87392.1"/>
    <property type="molecule type" value="mRNA"/>
</dbReference>
<dbReference type="EMBL" id="CH471062">
    <property type="protein sequence ID" value="EAW62270.1"/>
    <property type="molecule type" value="Genomic_DNA"/>
</dbReference>
<dbReference type="EMBL" id="CH471062">
    <property type="protein sequence ID" value="EAW62271.1"/>
    <property type="molecule type" value="Genomic_DNA"/>
</dbReference>
<dbReference type="EMBL" id="CH471062">
    <property type="protein sequence ID" value="EAW62272.1"/>
    <property type="molecule type" value="Genomic_DNA"/>
</dbReference>
<dbReference type="EMBL" id="CH471062">
    <property type="protein sequence ID" value="EAW62276.1"/>
    <property type="molecule type" value="Genomic_DNA"/>
</dbReference>
<dbReference type="EMBL" id="BC009839">
    <property type="protein sequence ID" value="AAH09839.1"/>
    <property type="molecule type" value="mRNA"/>
</dbReference>
<dbReference type="EMBL" id="BC020798">
    <property type="protein sequence ID" value="AAH20798.1"/>
    <property type="molecule type" value="mRNA"/>
</dbReference>
<dbReference type="EMBL" id="BC025673">
    <property type="protein sequence ID" value="AAH25673.1"/>
    <property type="molecule type" value="mRNA"/>
</dbReference>
<dbReference type="EMBL" id="BC065730">
    <property type="protein sequence ID" value="AAH65730.1"/>
    <property type="molecule type" value="mRNA"/>
</dbReference>
<dbReference type="EMBL" id="U37558">
    <property type="protein sequence ID" value="AAA79202.1"/>
    <property type="molecule type" value="mRNA"/>
</dbReference>
<dbReference type="CCDS" id="CCDS4171.1"/>
<dbReference type="CCDS" id="CCDS4172.1">
    <molecule id="P63208-2"/>
</dbReference>
<dbReference type="PIR" id="I39170">
    <property type="entry name" value="I39170"/>
</dbReference>
<dbReference type="RefSeq" id="NP_008861.2">
    <molecule id="P63208-2"/>
    <property type="nucleotide sequence ID" value="NM_006930.3"/>
</dbReference>
<dbReference type="RefSeq" id="NP_733779.1">
    <molecule id="P63208-1"/>
    <property type="nucleotide sequence ID" value="NM_170679.3"/>
</dbReference>
<dbReference type="PDB" id="1FQV">
    <property type="method" value="X-ray"/>
    <property type="resolution" value="2.80 A"/>
    <property type="chains" value="B/D/F/H/J/L/N/P=1-163"/>
</dbReference>
<dbReference type="PDB" id="1FS1">
    <property type="method" value="X-ray"/>
    <property type="resolution" value="1.80 A"/>
    <property type="chains" value="B/D=1-147"/>
</dbReference>
<dbReference type="PDB" id="1FS2">
    <property type="method" value="X-ray"/>
    <property type="resolution" value="2.90 A"/>
    <property type="chains" value="B/D=1-147"/>
</dbReference>
<dbReference type="PDB" id="1LDK">
    <property type="method" value="X-ray"/>
    <property type="resolution" value="3.10 A"/>
    <property type="chains" value="D=2-140"/>
</dbReference>
<dbReference type="PDB" id="1P22">
    <property type="method" value="X-ray"/>
    <property type="resolution" value="2.95 A"/>
    <property type="chains" value="B=1-163"/>
</dbReference>
<dbReference type="PDB" id="2ASS">
    <property type="method" value="X-ray"/>
    <property type="resolution" value="3.00 A"/>
    <property type="chains" value="A=2-160"/>
</dbReference>
<dbReference type="PDB" id="2AST">
    <property type="method" value="X-ray"/>
    <property type="resolution" value="2.30 A"/>
    <property type="chains" value="A=2-160"/>
</dbReference>
<dbReference type="PDB" id="2E31">
    <property type="method" value="X-ray"/>
    <property type="resolution" value="2.40 A"/>
    <property type="chains" value="B=1-163"/>
</dbReference>
<dbReference type="PDB" id="2E32">
    <property type="method" value="X-ray"/>
    <property type="resolution" value="3.52 A"/>
    <property type="chains" value="B/D=1-163"/>
</dbReference>
<dbReference type="PDB" id="2OVP">
    <property type="method" value="X-ray"/>
    <property type="resolution" value="2.90 A"/>
    <property type="chains" value="A=1-163"/>
</dbReference>
<dbReference type="PDB" id="2OVQ">
    <property type="method" value="X-ray"/>
    <property type="resolution" value="2.60 A"/>
    <property type="chains" value="A=1-163"/>
</dbReference>
<dbReference type="PDB" id="2OVR">
    <property type="method" value="X-ray"/>
    <property type="resolution" value="2.50 A"/>
    <property type="chains" value="A=1-163"/>
</dbReference>
<dbReference type="PDB" id="3L2O">
    <property type="method" value="X-ray"/>
    <property type="resolution" value="2.80 A"/>
    <property type="chains" value="A=1-69, A=82-163"/>
</dbReference>
<dbReference type="PDB" id="3WSO">
    <property type="method" value="X-ray"/>
    <property type="resolution" value="2.60 A"/>
    <property type="chains" value="B=1-163"/>
</dbReference>
<dbReference type="PDB" id="4I6J">
    <property type="method" value="X-ray"/>
    <property type="resolution" value="2.70 A"/>
    <property type="chains" value="C=1-163"/>
</dbReference>
<dbReference type="PDB" id="5IBK">
    <property type="method" value="X-ray"/>
    <property type="resolution" value="2.50 A"/>
    <property type="chains" value="A/D=1-69, A/D=82-163"/>
</dbReference>
<dbReference type="PDB" id="5JH5">
    <property type="method" value="X-ray"/>
    <property type="resolution" value="2.55 A"/>
    <property type="chains" value="B=2-163"/>
</dbReference>
<dbReference type="PDB" id="5K35">
    <property type="method" value="X-ray"/>
    <property type="resolution" value="2.85 A"/>
    <property type="chains" value="B=1-163"/>
</dbReference>
<dbReference type="PDB" id="5V4B">
    <property type="method" value="X-ray"/>
    <property type="resolution" value="2.60 A"/>
    <property type="chains" value="A=1-163"/>
</dbReference>
<dbReference type="PDB" id="5VZT">
    <property type="method" value="X-ray"/>
    <property type="resolution" value="2.70 A"/>
    <property type="chains" value="A/C=1-163"/>
</dbReference>
<dbReference type="PDB" id="5VZU">
    <property type="method" value="X-ray"/>
    <property type="resolution" value="2.70 A"/>
    <property type="chains" value="A/C=1-163"/>
</dbReference>
<dbReference type="PDB" id="5XYL">
    <property type="method" value="NMR"/>
    <property type="chains" value="A=1-163"/>
</dbReference>
<dbReference type="PDB" id="6BVA">
    <property type="method" value="X-ray"/>
    <property type="resolution" value="2.66 A"/>
    <property type="chains" value="C/D=1-163"/>
</dbReference>
<dbReference type="PDB" id="6BYH">
    <property type="method" value="X-ray"/>
    <property type="resolution" value="2.61 A"/>
    <property type="chains" value="A/B/G=1-163"/>
</dbReference>
<dbReference type="PDB" id="6C16">
    <property type="method" value="X-ray"/>
    <property type="resolution" value="3.27 A"/>
    <property type="chains" value="A/B=1-163"/>
</dbReference>
<dbReference type="PDB" id="6M90">
    <property type="method" value="X-ray"/>
    <property type="resolution" value="2.05 A"/>
    <property type="chains" value="B=2-163"/>
</dbReference>
<dbReference type="PDB" id="6M91">
    <property type="method" value="X-ray"/>
    <property type="resolution" value="2.40 A"/>
    <property type="chains" value="B=2-163"/>
</dbReference>
<dbReference type="PDB" id="6M92">
    <property type="method" value="X-ray"/>
    <property type="resolution" value="2.35 A"/>
    <property type="chains" value="B=2-163"/>
</dbReference>
<dbReference type="PDB" id="6M93">
    <property type="method" value="X-ray"/>
    <property type="resolution" value="2.50 A"/>
    <property type="chains" value="B=2-163"/>
</dbReference>
<dbReference type="PDB" id="6M94">
    <property type="method" value="X-ray"/>
    <property type="resolution" value="2.70 A"/>
    <property type="chains" value="B=2-163"/>
</dbReference>
<dbReference type="PDB" id="6O60">
    <property type="method" value="X-ray"/>
    <property type="resolution" value="2.50 A"/>
    <property type="chains" value="D=1-163"/>
</dbReference>
<dbReference type="PDB" id="6TTU">
    <property type="method" value="EM"/>
    <property type="resolution" value="3.70 A"/>
    <property type="chains" value="S=1-163"/>
</dbReference>
<dbReference type="PDB" id="6VCD">
    <property type="method" value="EM"/>
    <property type="resolution" value="3.00 A"/>
    <property type="chains" value="C=1-163"/>
</dbReference>
<dbReference type="PDB" id="6W66">
    <property type="method" value="X-ray"/>
    <property type="resolution" value="3.21 A"/>
    <property type="chains" value="A=1-163"/>
</dbReference>
<dbReference type="PDB" id="6WCQ">
    <property type="method" value="EM"/>
    <property type="resolution" value="8.50 A"/>
    <property type="chains" value="A=1-163"/>
</dbReference>
<dbReference type="PDB" id="6WNX">
    <property type="method" value="X-ray"/>
    <property type="resolution" value="2.50 A"/>
    <property type="chains" value="B/E/H=1-163"/>
</dbReference>
<dbReference type="PDB" id="7B5L">
    <property type="method" value="EM"/>
    <property type="resolution" value="3.80 A"/>
    <property type="chains" value="S=1-163"/>
</dbReference>
<dbReference type="PDB" id="7B5M">
    <property type="method" value="EM"/>
    <property type="resolution" value="3.91 A"/>
    <property type="chains" value="S=1-163"/>
</dbReference>
<dbReference type="PDB" id="7B5R">
    <property type="method" value="EM"/>
    <property type="resolution" value="3.80 A"/>
    <property type="chains" value="S=1-163"/>
</dbReference>
<dbReference type="PDB" id="7T1Y">
    <property type="method" value="X-ray"/>
    <property type="resolution" value="2.55 A"/>
    <property type="chains" value="A=1-163"/>
</dbReference>
<dbReference type="PDB" id="7T1Z">
    <property type="method" value="X-ray"/>
    <property type="resolution" value="2.77 A"/>
    <property type="chains" value="A=1-69, A=89-163"/>
</dbReference>
<dbReference type="PDB" id="7Z8B">
    <property type="method" value="EM"/>
    <property type="resolution" value="2.80 A"/>
    <property type="chains" value="S=1-163"/>
</dbReference>
<dbReference type="PDB" id="7Z8T">
    <property type="method" value="EM"/>
    <property type="resolution" value="3.00 A"/>
    <property type="chains" value="S=1-163"/>
</dbReference>
<dbReference type="PDB" id="7Z8V">
    <property type="method" value="EM"/>
    <property type="resolution" value="2.70 A"/>
    <property type="chains" value="S=1-163"/>
</dbReference>
<dbReference type="PDB" id="7ZBW">
    <property type="method" value="EM"/>
    <property type="resolution" value="3.50 A"/>
    <property type="chains" value="S=1-163"/>
</dbReference>
<dbReference type="PDB" id="7ZBZ">
    <property type="method" value="EM"/>
    <property type="resolution" value="3.10 A"/>
    <property type="chains" value="S=1-163"/>
</dbReference>
<dbReference type="PDB" id="8BYA">
    <property type="method" value="EM"/>
    <property type="resolution" value="3.38 A"/>
    <property type="chains" value="D=1-163"/>
</dbReference>
<dbReference type="PDB" id="8BYL">
    <property type="method" value="EM"/>
    <property type="resolution" value="3.50 A"/>
    <property type="chains" value="A=1-163"/>
</dbReference>
<dbReference type="PDB" id="8CDJ">
    <property type="method" value="EM"/>
    <property type="resolution" value="3.40 A"/>
    <property type="chains" value="S=1-163"/>
</dbReference>
<dbReference type="PDB" id="8CDK">
    <property type="method" value="EM"/>
    <property type="resolution" value="3.32 A"/>
    <property type="chains" value="S=1-163"/>
</dbReference>
<dbReference type="PDB" id="8OR0">
    <property type="method" value="EM"/>
    <property type="resolution" value="3.10 A"/>
    <property type="chains" value="D=1-163"/>
</dbReference>
<dbReference type="PDB" id="8OR3">
    <property type="method" value="EM"/>
    <property type="resolution" value="2.90 A"/>
    <property type="chains" value="D=1-163"/>
</dbReference>
<dbReference type="PDB" id="8OR4">
    <property type="method" value="EM"/>
    <property type="resolution" value="3.80 A"/>
    <property type="chains" value="D=1-163"/>
</dbReference>
<dbReference type="PDB" id="8S7D">
    <property type="method" value="EM"/>
    <property type="resolution" value="3.20 A"/>
    <property type="chains" value="C=1-163"/>
</dbReference>
<dbReference type="PDB" id="8S7E">
    <property type="method" value="EM"/>
    <property type="resolution" value="3.40 A"/>
    <property type="chains" value="A=2-163"/>
</dbReference>
<dbReference type="PDB" id="8UA6">
    <property type="method" value="EM"/>
    <property type="resolution" value="3.90 A"/>
    <property type="chains" value="B=1-160"/>
</dbReference>
<dbReference type="PDB" id="8UBT">
    <property type="method" value="EM"/>
    <property type="resolution" value="3.10 A"/>
    <property type="chains" value="B=1-163"/>
</dbReference>
<dbReference type="PDB" id="8UBU">
    <property type="method" value="EM"/>
    <property type="resolution" value="4.60 A"/>
    <property type="chains" value="C/G=1-163"/>
</dbReference>
<dbReference type="PDB" id="9CB3">
    <property type="method" value="EM"/>
    <property type="resolution" value="3.47 A"/>
    <property type="chains" value="B=1-163"/>
</dbReference>
<dbReference type="PDB" id="9JKB">
    <property type="method" value="EM"/>
    <property type="resolution" value="3.93 A"/>
    <property type="chains" value="B=1-163"/>
</dbReference>
<dbReference type="PDB" id="9KBD">
    <property type="method" value="EM"/>
    <property type="resolution" value="3.70 A"/>
    <property type="chains" value="B=1-163"/>
</dbReference>
<dbReference type="PDB" id="9KBF">
    <property type="method" value="EM"/>
    <property type="resolution" value="3.74 A"/>
    <property type="chains" value="B=1-163"/>
</dbReference>
<dbReference type="PDBsum" id="1FQV"/>
<dbReference type="PDBsum" id="1FS1"/>
<dbReference type="PDBsum" id="1FS2"/>
<dbReference type="PDBsum" id="1LDK"/>
<dbReference type="PDBsum" id="1P22"/>
<dbReference type="PDBsum" id="2ASS"/>
<dbReference type="PDBsum" id="2AST"/>
<dbReference type="PDBsum" id="2E31"/>
<dbReference type="PDBsum" id="2E32"/>
<dbReference type="PDBsum" id="2OVP"/>
<dbReference type="PDBsum" id="2OVQ"/>
<dbReference type="PDBsum" id="2OVR"/>
<dbReference type="PDBsum" id="3L2O"/>
<dbReference type="PDBsum" id="3WSO"/>
<dbReference type="PDBsum" id="4I6J"/>
<dbReference type="PDBsum" id="5IBK"/>
<dbReference type="PDBsum" id="5JH5"/>
<dbReference type="PDBsum" id="5K35"/>
<dbReference type="PDBsum" id="5V4B"/>
<dbReference type="PDBsum" id="5VZT"/>
<dbReference type="PDBsum" id="5VZU"/>
<dbReference type="PDBsum" id="5XYL"/>
<dbReference type="PDBsum" id="6BVA"/>
<dbReference type="PDBsum" id="6BYH"/>
<dbReference type="PDBsum" id="6C16"/>
<dbReference type="PDBsum" id="6M90"/>
<dbReference type="PDBsum" id="6M91"/>
<dbReference type="PDBsum" id="6M92"/>
<dbReference type="PDBsum" id="6M93"/>
<dbReference type="PDBsum" id="6M94"/>
<dbReference type="PDBsum" id="6O60"/>
<dbReference type="PDBsum" id="6TTU"/>
<dbReference type="PDBsum" id="6VCD"/>
<dbReference type="PDBsum" id="6W66"/>
<dbReference type="PDBsum" id="6WCQ"/>
<dbReference type="PDBsum" id="6WNX"/>
<dbReference type="PDBsum" id="7B5L"/>
<dbReference type="PDBsum" id="7B5M"/>
<dbReference type="PDBsum" id="7B5R"/>
<dbReference type="PDBsum" id="7T1Y"/>
<dbReference type="PDBsum" id="7T1Z"/>
<dbReference type="PDBsum" id="7Z8B"/>
<dbReference type="PDBsum" id="7Z8T"/>
<dbReference type="PDBsum" id="7Z8V"/>
<dbReference type="PDBsum" id="7ZBW"/>
<dbReference type="PDBsum" id="7ZBZ"/>
<dbReference type="PDBsum" id="8BYA"/>
<dbReference type="PDBsum" id="8BYL"/>
<dbReference type="PDBsum" id="8CDJ"/>
<dbReference type="PDBsum" id="8CDK"/>
<dbReference type="PDBsum" id="8OR0"/>
<dbReference type="PDBsum" id="8OR3"/>
<dbReference type="PDBsum" id="8OR4"/>
<dbReference type="PDBsum" id="8S7D"/>
<dbReference type="PDBsum" id="8S7E"/>
<dbReference type="PDBsum" id="8UA6"/>
<dbReference type="PDBsum" id="8UBT"/>
<dbReference type="PDBsum" id="8UBU"/>
<dbReference type="PDBsum" id="9CB3"/>
<dbReference type="PDBsum" id="9JKB"/>
<dbReference type="PDBsum" id="9KBD"/>
<dbReference type="PDBsum" id="9KBF"/>
<dbReference type="EMDB" id="EMD-10585"/>
<dbReference type="EMDB" id="EMD-12037"/>
<dbReference type="EMDB" id="EMD-12040"/>
<dbReference type="EMDB" id="EMD-12048"/>
<dbReference type="EMDB" id="EMD-14547"/>
<dbReference type="EMDB" id="EMD-14563"/>
<dbReference type="EMDB" id="EMD-14564"/>
<dbReference type="EMDB" id="EMD-14594"/>
<dbReference type="EMDB" id="EMD-14597"/>
<dbReference type="EMDB" id="EMD-16325"/>
<dbReference type="EMDB" id="EMD-16327"/>
<dbReference type="EMDB" id="EMD-16575"/>
<dbReference type="EMDB" id="EMD-16576"/>
<dbReference type="EMDB" id="EMD-17114"/>
<dbReference type="EMDB" id="EMD-17116"/>
<dbReference type="EMDB" id="EMD-17117"/>
<dbReference type="EMDB" id="EMD-19766"/>
<dbReference type="EMDB" id="EMD-19768"/>
<dbReference type="EMDB" id="EMD-21149"/>
<dbReference type="EMDB" id="EMD-21617"/>
<dbReference type="EMDB" id="EMD-3401"/>
<dbReference type="EMDB" id="EMD-42051"/>
<dbReference type="EMDB" id="EMD-42102"/>
<dbReference type="EMDB" id="EMD-42105"/>
<dbReference type="EMDB" id="EMD-45413"/>
<dbReference type="EMDB" id="EMD-61550"/>
<dbReference type="EMDB" id="EMD-62222"/>
<dbReference type="EMDB" id="EMD-62223"/>
<dbReference type="SASBDB" id="P63208"/>
<dbReference type="SMR" id="P63208"/>
<dbReference type="BioGRID" id="112391">
    <property type="interactions" value="510"/>
</dbReference>
<dbReference type="ComplexPortal" id="CPX-2239">
    <property type="entry name" value="SCF E3 ubiquitin ligase complex, FBXL5 variant"/>
</dbReference>
<dbReference type="ComplexPortal" id="CPX-2241">
    <property type="entry name" value="SCF E3 ubiquitin ligase complex, FBXL13 variant"/>
</dbReference>
<dbReference type="ComplexPortal" id="CPX-2272">
    <property type="entry name" value="Non-canonical polycomb repressive complex 1.1, RING2-PCGF1-YAF2 variant"/>
</dbReference>
<dbReference type="ComplexPortal" id="CPX-2319">
    <property type="entry name" value="SCF E3 ubiquitin ligase complex, FBXL14 variant"/>
</dbReference>
<dbReference type="ComplexPortal" id="CPX-2343">
    <property type="entry name" value="SCF E3 ubiquitin ligase complex, FBXL16 variant"/>
</dbReference>
<dbReference type="ComplexPortal" id="CPX-2354">
    <property type="entry name" value="Non-canonical polycomb repressive complex 1.1, RING1-PCGF1-RYBP variant"/>
</dbReference>
<dbReference type="ComplexPortal" id="CPX-2365">
    <property type="entry name" value="SCF E3 ubiquitin ligase complex, BTRC variant"/>
</dbReference>
<dbReference type="ComplexPortal" id="CPX-2438">
    <property type="entry name" value="SCF E3 ubiquitin ligase complex, FBXL8 variant"/>
</dbReference>
<dbReference type="ComplexPortal" id="CPX-2489">
    <property type="entry name" value="SCF E3 ubiquitin ligase complex, FBXL22 variant"/>
</dbReference>
<dbReference type="ComplexPortal" id="CPX-2492">
    <property type="entry name" value="SCF E3 ubiquitin ligase complex, FBXL15 variant"/>
</dbReference>
<dbReference type="ComplexPortal" id="CPX-2512">
    <property type="entry name" value="SCF E3 ubiquitin ligase complex, FBXL4 variant"/>
</dbReference>
<dbReference type="ComplexPortal" id="CPX-2516">
    <property type="entry name" value="SCF E3 ubiquitin ligase complex, FBXL6 variant"/>
</dbReference>
<dbReference type="ComplexPortal" id="CPX-2538">
    <property type="entry name" value="SCF E3 ubiquitin ligase complex, KDM2A variant"/>
</dbReference>
<dbReference type="ComplexPortal" id="CPX-2553">
    <property type="entry name" value="SCF E3 ubiquitin ligase complex, FBXL18 variant"/>
</dbReference>
<dbReference type="ComplexPortal" id="CPX-2554">
    <property type="entry name" value="SCF E3 ubiquitin ligase complex, FBXL19 variant"/>
</dbReference>
<dbReference type="ComplexPortal" id="CPX-2627">
    <property type="entry name" value="Non-canonical polycomb repressive complex 1.1, RING2-PCGF1-RYBP variant"/>
</dbReference>
<dbReference type="ComplexPortal" id="CPX-2658">
    <property type="entry name" value="SCF E3 ubiquitin ligase complex, FBXL12 variant"/>
</dbReference>
<dbReference type="ComplexPortal" id="CPX-2683">
    <property type="entry name" value="SCF E3 ubiquitin ligase complex, FBXL7 variant"/>
</dbReference>
<dbReference type="ComplexPortal" id="CPX-2748">
    <property type="entry name" value="SCF E3 ubiquitin ligase complex, FBXL21 variant"/>
</dbReference>
<dbReference type="ComplexPortal" id="CPX-2773">
    <property type="entry name" value="SCF E3 ubiquitin ligase complex, FBXL17 variant"/>
</dbReference>
<dbReference type="ComplexPortal" id="CPX-2832">
    <property type="entry name" value="SCF E3 ubiquitin ligase complex, KDM2B variant"/>
</dbReference>
<dbReference type="ComplexPortal" id="CPX-2873">
    <property type="entry name" value="SCF E3 ubiquitin ligase complex, FBXL20 variant"/>
</dbReference>
<dbReference type="ComplexPortal" id="CPX-3291">
    <property type="entry name" value="SCF E3 ubiquitin ligase complex, FBXL3 variant"/>
</dbReference>
<dbReference type="ComplexPortal" id="CPX-3292">
    <property type="entry name" value="SCF E3 ubiquitin ligase complex, FBXL2 variant"/>
</dbReference>
<dbReference type="ComplexPortal" id="CPX-3295">
    <property type="entry name" value="SCF E3 ubiquitin ligase complex, SKP2 variant"/>
</dbReference>
<dbReference type="ComplexPortal" id="CPX-7561">
    <property type="entry name" value="Non-canonical polycomb repressive complex 1.1, RING1-PCGF1-YAF2 variant"/>
</dbReference>
<dbReference type="ComplexPortal" id="CPX-7747">
    <property type="entry name" value="SCF E3 ubiquitin ligase complex, FBXW2 variant"/>
</dbReference>
<dbReference type="ComplexPortal" id="CPX-7761">
    <property type="entry name" value="SCF E3 ubiquitin ligase complex, FBXW4 variant"/>
</dbReference>
<dbReference type="ComplexPortal" id="CPX-7762">
    <property type="entry name" value="SCF E3 ubiquitin ligase complex, FBXW5 variant"/>
</dbReference>
<dbReference type="ComplexPortal" id="CPX-7763">
    <property type="entry name" value="SCF E3 ubiquitin ligase complex, FBXW7 variant"/>
</dbReference>
<dbReference type="ComplexPortal" id="CPX-7784">
    <property type="entry name" value="SCF E3 ubiquitin ligase complex, FBXW8-CUL7 variant"/>
</dbReference>
<dbReference type="ComplexPortal" id="CPX-7785">
    <property type="entry name" value="SCF E3 ubiquitin ligase complex, FBXW9 variant"/>
</dbReference>
<dbReference type="ComplexPortal" id="CPX-7786">
    <property type="entry name" value="SCF E3 ubiquitin ligase complex, FBXW10 variant"/>
</dbReference>
<dbReference type="ComplexPortal" id="CPX-7821">
    <property type="entry name" value="SCF E3 ubiquitin ligase complex, FBXW11 variant"/>
</dbReference>
<dbReference type="ComplexPortal" id="CPX-7822">
    <property type="entry name" value="SCF E3 ubiquitin ligase complex, FBXW12 variant"/>
</dbReference>
<dbReference type="ComplexPortal" id="CPX-7846">
    <property type="entry name" value="SCF E3 ubiquitin ligase complex, CCNF variant"/>
</dbReference>
<dbReference type="ComplexPortal" id="CPX-7847">
    <property type="entry name" value="SCF E3 ubiquitin ligase complex, FBXO2 variant"/>
</dbReference>
<dbReference type="ComplexPortal" id="CPX-7881">
    <property type="entry name" value="SCF E3 ubiquitin ligase complex, FBXO3 variant"/>
</dbReference>
<dbReference type="ComplexPortal" id="CPX-7882">
    <property type="entry name" value="SCF E3 ubiquitin ligase complex, FBXO4 variant"/>
</dbReference>
<dbReference type="ComplexPortal" id="CPX-7904">
    <property type="entry name" value="SCF E3 ubiquitin ligase complex, FBXO5 variant"/>
</dbReference>
<dbReference type="ComplexPortal" id="CPX-7905">
    <property type="entry name" value="SCF E3 ubiquitin ligase complex, FBXO6 variant"/>
</dbReference>
<dbReference type="ComplexPortal" id="CPX-7906">
    <property type="entry name" value="SCF E3 ubiquitin ligase complex, FBXO7 variant"/>
</dbReference>
<dbReference type="ComplexPortal" id="CPX-7921">
    <property type="entry name" value="SCF E3 ubiquitin ligase complex, FBXO8 variant"/>
</dbReference>
<dbReference type="ComplexPortal" id="CPX-7922">
    <property type="entry name" value="SCF E3 ubiquitin ligase complex, FBXO9 variant"/>
</dbReference>
<dbReference type="ComplexPortal" id="CPX-7923">
    <property type="entry name" value="SCF E3 ubiquitin ligase complex, FBXO10 variant"/>
</dbReference>
<dbReference type="ComplexPortal" id="CPX-7924">
    <property type="entry name" value="SCF E3 ubiquitin ligase complex, FBXO11 variant"/>
</dbReference>
<dbReference type="ComplexPortal" id="CPX-7925">
    <property type="entry name" value="SCF E3 ubiquitin ligase complex, FBXO15 variant"/>
</dbReference>
<dbReference type="ComplexPortal" id="CPX-7926">
    <property type="entry name" value="SCF E3 ubiquitin ligase complex, FBXO16 variant"/>
</dbReference>
<dbReference type="ComplexPortal" id="CPX-7927">
    <property type="entry name" value="SCF E3 ubiquitin ligase complex, FBXO17 variant"/>
</dbReference>
<dbReference type="ComplexPortal" id="CPX-7928">
    <property type="entry name" value="SCF E3 ubiquitin ligase complex, FBH1 variant"/>
</dbReference>
<dbReference type="ComplexPortal" id="CPX-7929">
    <property type="entry name" value="SCF E3 ubiquitin ligase complex, LMO7 variant"/>
</dbReference>
<dbReference type="ComplexPortal" id="CPX-7930">
    <property type="entry name" value="SCF E3 ubiquitin ligase complex, FBXO21 variant"/>
</dbReference>
<dbReference type="ComplexPortal" id="CPX-7962">
    <property type="entry name" value="SCF E3 ubiquitin ligase complex, FBXO22 variant"/>
</dbReference>
<dbReference type="ComplexPortal" id="CPX-7963">
    <property type="entry name" value="SCF E3 ubiquitin ligase complex, FBXO24 variant"/>
</dbReference>
<dbReference type="ComplexPortal" id="CPX-7965">
    <property type="entry name" value="SCF E3 ubiquitin ligase complex, FBXO25 variant"/>
</dbReference>
<dbReference type="ComplexPortal" id="CPX-7966">
    <property type="entry name" value="SCF E3 ubiquitin ligase complex, FBXO27 variant"/>
</dbReference>
<dbReference type="ComplexPortal" id="CPX-7967">
    <property type="entry name" value="SCF E3 ubiquitin ligase complex, FBXO28 variant"/>
</dbReference>
<dbReference type="ComplexPortal" id="CPX-7968">
    <property type="entry name" value="SCF E3 ubiquitin ligase complex, FBXO30 variant"/>
</dbReference>
<dbReference type="ComplexPortal" id="CPX-7971">
    <property type="entry name" value="SCF E3 ubiquitin ligase complex, FBXO31 variant"/>
</dbReference>
<dbReference type="ComplexPortal" id="CPX-7972">
    <property type="entry name" value="SCF E3 ubiquitin ligase complex, FBXO32 variant"/>
</dbReference>
<dbReference type="ComplexPortal" id="CPX-7973">
    <property type="entry name" value="SCF E3 ubiquitin ligase complex, FBXO33 variant"/>
</dbReference>
<dbReference type="ComplexPortal" id="CPX-7975">
    <property type="entry name" value="SCF E3 ubiquitin ligase complex, FBXO34 variant"/>
</dbReference>
<dbReference type="ComplexPortal" id="CPX-7976">
    <property type="entry name" value="SCF E3 ubiquitin ligase complex, FBXO36 variant"/>
</dbReference>
<dbReference type="ComplexPortal" id="CPX-7977">
    <property type="entry name" value="SCF E3 ubiquitin ligase complex, FBXO38 variant"/>
</dbReference>
<dbReference type="ComplexPortal" id="CPX-7979">
    <property type="entry name" value="SCF E3 ubiquitin ligase complex, FBXO39 variant"/>
</dbReference>
<dbReference type="ComplexPortal" id="CPX-7981">
    <property type="entry name" value="SCF E3 ubiquitin ligase complex, FBXO40 variant"/>
</dbReference>
<dbReference type="ComplexPortal" id="CPX-7982">
    <property type="entry name" value="SCF E3 ubiquitin ligase complex, FBXO41 variant"/>
</dbReference>
<dbReference type="ComplexPortal" id="CPX-7983">
    <property type="entry name" value="SCF E3 ubiquitin ligase complex, FBXO42 variant"/>
</dbReference>
<dbReference type="ComplexPortal" id="CPX-8002">
    <property type="entry name" value="SCF E3 ubiquitin ligase complex, FBXO43 variant"/>
</dbReference>
<dbReference type="ComplexPortal" id="CPX-8003">
    <property type="entry name" value="SCF E3 ubiquitin ligase complex, FBXO44 variant"/>
</dbReference>
<dbReference type="ComplexPortal" id="CPX-8004">
    <property type="entry name" value="Non-canonical FBXO45-MYCBP2-SKP1 E3 ubiquitin ligase complex"/>
</dbReference>
<dbReference type="ComplexPortal" id="CPX-8005">
    <property type="entry name" value="SCF E3 ubiquitin ligase complex, FBXO46 variant"/>
</dbReference>
<dbReference type="ComplexPortal" id="CPX-8006">
    <property type="entry name" value="SCF E3 ubiquitin ligase complex, FBXO47 variant"/>
</dbReference>
<dbReference type="ComplexPortal" id="CPX-8108">
    <property type="entry name" value="SCF E3 ubiquitin ligase complex, TSPAN17 variant"/>
</dbReference>
<dbReference type="CORUM" id="P63208"/>
<dbReference type="DIP" id="DIP-31606N"/>
<dbReference type="FunCoup" id="P63208">
    <property type="interactions" value="3721"/>
</dbReference>
<dbReference type="IntAct" id="P63208">
    <property type="interactions" value="289"/>
</dbReference>
<dbReference type="MINT" id="P63208"/>
<dbReference type="STRING" id="9606.ENSP00000231487"/>
<dbReference type="DrugBank" id="DB06980">
    <property type="generic name" value="(2S)-2-(1H-indol-3-yl)hexanoic acid"/>
</dbReference>
<dbReference type="DrugBank" id="DB06981">
    <property type="generic name" value="(2S)-2-(1H-indol-3-yl)pentanoic acid"/>
</dbReference>
<dbReference type="DrugBank" id="DB06982">
    <property type="generic name" value="(2S)-8-[(tert-butoxycarbonyl)amino]-2-(1H-indol-3-yl)octanoic acid"/>
</dbReference>
<dbReference type="DrugBank" id="DB01750">
    <property type="generic name" value="1-naphthaleneacetic acid"/>
</dbReference>
<dbReference type="DrugBank" id="DB07950">
    <property type="generic name" value="Indoleacetic acid"/>
</dbReference>
<dbReference type="MoonDB" id="P63208">
    <property type="type" value="Predicted"/>
</dbReference>
<dbReference type="GlyGen" id="P63208">
    <property type="glycosylation" value="1 site, 1 O-linked glycan (1 site)"/>
</dbReference>
<dbReference type="iPTMnet" id="P63208"/>
<dbReference type="MetOSite" id="P63208"/>
<dbReference type="PhosphoSitePlus" id="P63208"/>
<dbReference type="SwissPalm" id="P63208"/>
<dbReference type="BioMuta" id="SKP1"/>
<dbReference type="DMDM" id="52783797"/>
<dbReference type="jPOST" id="P63208"/>
<dbReference type="MassIVE" id="P63208"/>
<dbReference type="PaxDb" id="9606-ENSP00000231487"/>
<dbReference type="PeptideAtlas" id="P63208"/>
<dbReference type="ProteomicsDB" id="57504"/>
<dbReference type="ProteomicsDB" id="57505">
    <molecule id="P63208-2"/>
</dbReference>
<dbReference type="Pumba" id="P63208"/>
<dbReference type="TopDownProteomics" id="P63208-1">
    <molecule id="P63208-1"/>
</dbReference>
<dbReference type="Antibodypedia" id="4566">
    <property type="antibodies" value="561 antibodies from 40 providers"/>
</dbReference>
<dbReference type="DNASU" id="6500"/>
<dbReference type="Ensembl" id="ENST00000353411.11">
    <molecule id="P63208-1"/>
    <property type="protein sequence ID" value="ENSP00000231487.9"/>
    <property type="gene ID" value="ENSG00000113558.19"/>
</dbReference>
<dbReference type="Ensembl" id="ENST00000517625.5">
    <molecule id="P63208-1"/>
    <property type="protein sequence ID" value="ENSP00000429961.1"/>
    <property type="gene ID" value="ENSG00000113558.19"/>
</dbReference>
<dbReference type="Ensembl" id="ENST00000522552.5">
    <molecule id="P63208-2"/>
    <property type="protein sequence ID" value="ENSP00000429472.1"/>
    <property type="gene ID" value="ENSG00000113558.19"/>
</dbReference>
<dbReference type="Ensembl" id="ENST00000522855.5">
    <molecule id="P63208-1"/>
    <property type="protein sequence ID" value="ENSP00000429686.1"/>
    <property type="gene ID" value="ENSG00000113558.19"/>
</dbReference>
<dbReference type="GeneID" id="6500"/>
<dbReference type="KEGG" id="hsa:6500"/>
<dbReference type="MANE-Select" id="ENST00000353411.11">
    <property type="protein sequence ID" value="ENSP00000231487.9"/>
    <property type="RefSeq nucleotide sequence ID" value="NM_170679.3"/>
    <property type="RefSeq protein sequence ID" value="NP_733779.1"/>
</dbReference>
<dbReference type="UCSC" id="uc003kzc.5">
    <property type="organism name" value="human"/>
</dbReference>
<dbReference type="AGR" id="HGNC:10899"/>
<dbReference type="CTD" id="6500"/>
<dbReference type="DisGeNET" id="6500"/>
<dbReference type="GeneCards" id="SKP1"/>
<dbReference type="HGNC" id="HGNC:10899">
    <property type="gene designation" value="SKP1"/>
</dbReference>
<dbReference type="HPA" id="ENSG00000113558">
    <property type="expression patterns" value="Low tissue specificity"/>
</dbReference>
<dbReference type="MIM" id="601434">
    <property type="type" value="gene"/>
</dbReference>
<dbReference type="neXtProt" id="NX_P63208"/>
<dbReference type="OpenTargets" id="ENSG00000113558"/>
<dbReference type="PharmGKB" id="PA162403424"/>
<dbReference type="VEuPathDB" id="HostDB:ENSG00000113558"/>
<dbReference type="eggNOG" id="KOG1724">
    <property type="taxonomic scope" value="Eukaryota"/>
</dbReference>
<dbReference type="GeneTree" id="ENSGT00390000012652"/>
<dbReference type="InParanoid" id="P63208"/>
<dbReference type="OMA" id="DKYTASM"/>
<dbReference type="OrthoDB" id="2342932at2759"/>
<dbReference type="PAN-GO" id="P63208">
    <property type="GO annotations" value="4 GO annotations based on evolutionary models"/>
</dbReference>
<dbReference type="PhylomeDB" id="P63208"/>
<dbReference type="TreeFam" id="TF354233"/>
<dbReference type="BioCyc" id="MetaCyc:ENSG00000113558-MONOMER"/>
<dbReference type="PathwayCommons" id="P63208"/>
<dbReference type="Reactome" id="R-HSA-1169091">
    <property type="pathway name" value="Activation of NF-kappaB in B cells"/>
</dbReference>
<dbReference type="Reactome" id="R-HSA-1170546">
    <property type="pathway name" value="Prolactin receptor signaling"/>
</dbReference>
<dbReference type="Reactome" id="R-HSA-174113">
    <property type="pathway name" value="SCF-beta-TrCP mediated degradation of Emi1"/>
</dbReference>
<dbReference type="Reactome" id="R-HSA-180534">
    <property type="pathway name" value="Vpu mediated degradation of CD4"/>
</dbReference>
<dbReference type="Reactome" id="R-HSA-187577">
    <property type="pathway name" value="SCF(Skp2)-mediated degradation of p27/p21"/>
</dbReference>
<dbReference type="Reactome" id="R-HSA-195253">
    <property type="pathway name" value="Degradation of beta-catenin by the destruction complex"/>
</dbReference>
<dbReference type="Reactome" id="R-HSA-202424">
    <property type="pathway name" value="Downstream TCR signaling"/>
</dbReference>
<dbReference type="Reactome" id="R-HSA-2122947">
    <property type="pathway name" value="NOTCH1 Intracellular Domain Regulates Transcription"/>
</dbReference>
<dbReference type="Reactome" id="R-HSA-2565942">
    <property type="pathway name" value="Regulation of PLK1 Activity at G2/M Transition"/>
</dbReference>
<dbReference type="Reactome" id="R-HSA-2644606">
    <property type="pathway name" value="Constitutive Signaling by NOTCH1 PEST Domain Mutants"/>
</dbReference>
<dbReference type="Reactome" id="R-HSA-2644607">
    <property type="pathway name" value="Loss of Function of FBXW7 in Cancer and NOTCH1 Signaling"/>
</dbReference>
<dbReference type="Reactome" id="R-HSA-2871837">
    <property type="pathway name" value="FCERI mediated NF-kB activation"/>
</dbReference>
<dbReference type="Reactome" id="R-HSA-2894862">
    <property type="pathway name" value="Constitutive Signaling by NOTCH1 HD+PEST Domain Mutants"/>
</dbReference>
<dbReference type="Reactome" id="R-HSA-400253">
    <property type="pathway name" value="Circadian Clock"/>
</dbReference>
<dbReference type="Reactome" id="R-HSA-5607761">
    <property type="pathway name" value="Dectin-1 mediated noncanonical NF-kB signaling"/>
</dbReference>
<dbReference type="Reactome" id="R-HSA-5607764">
    <property type="pathway name" value="CLEC7A (Dectin-1) signaling"/>
</dbReference>
<dbReference type="Reactome" id="R-HSA-5610780">
    <property type="pathway name" value="Degradation of GLI1 by the proteasome"/>
</dbReference>
<dbReference type="Reactome" id="R-HSA-5610783">
    <property type="pathway name" value="Degradation of GLI2 by the proteasome"/>
</dbReference>
<dbReference type="Reactome" id="R-HSA-5610785">
    <property type="pathway name" value="GLI3 is processed to GLI3R by the proteasome"/>
</dbReference>
<dbReference type="Reactome" id="R-HSA-5676590">
    <property type="pathway name" value="NIK--&gt;noncanonical NF-kB signaling"/>
</dbReference>
<dbReference type="Reactome" id="R-HSA-5684264">
    <property type="pathway name" value="MAP3K8 (TPL2)-dependent MAPK1/3 activation"/>
</dbReference>
<dbReference type="Reactome" id="R-HSA-68949">
    <property type="pathway name" value="Orc1 removal from chromatin"/>
</dbReference>
<dbReference type="Reactome" id="R-HSA-69231">
    <property type="pathway name" value="Cyclin D associated events in G1"/>
</dbReference>
<dbReference type="Reactome" id="R-HSA-8854050">
    <property type="pathway name" value="FBXL7 down-regulates AURKA during mitotic entry and in early mitosis"/>
</dbReference>
<dbReference type="Reactome" id="R-HSA-8939902">
    <property type="pathway name" value="Regulation of RUNX2 expression and activity"/>
</dbReference>
<dbReference type="Reactome" id="R-HSA-8951664">
    <property type="pathway name" value="Neddylation"/>
</dbReference>
<dbReference type="Reactome" id="R-HSA-9020702">
    <property type="pathway name" value="Interleukin-1 signaling"/>
</dbReference>
<dbReference type="Reactome" id="R-HSA-917937">
    <property type="pathway name" value="Iron uptake and transport"/>
</dbReference>
<dbReference type="Reactome" id="R-HSA-9604323">
    <property type="pathway name" value="Negative regulation of NOTCH4 signaling"/>
</dbReference>
<dbReference type="Reactome" id="R-HSA-9708530">
    <property type="pathway name" value="Regulation of BACH1 activity"/>
</dbReference>
<dbReference type="Reactome" id="R-HSA-9725371">
    <property type="pathway name" value="Nuclear events stimulated by ALK signaling in cancer"/>
</dbReference>
<dbReference type="Reactome" id="R-HSA-9762114">
    <property type="pathway name" value="GSK3B and BTRC:CUL1-mediated-degradation of NFE2L2"/>
</dbReference>
<dbReference type="Reactome" id="R-HSA-983168">
    <property type="pathway name" value="Antigen processing: Ubiquitination &amp; Proteasome degradation"/>
</dbReference>
<dbReference type="SignaLink" id="P63208"/>
<dbReference type="SIGNOR" id="P63208"/>
<dbReference type="UniPathway" id="UPA00143"/>
<dbReference type="BioGRID-ORCS" id="6500">
    <property type="hits" value="684 hits in 1135 CRISPR screens"/>
</dbReference>
<dbReference type="CD-CODE" id="8C2F96ED">
    <property type="entry name" value="Centrosome"/>
</dbReference>
<dbReference type="CD-CODE" id="91857CE7">
    <property type="entry name" value="Nucleolus"/>
</dbReference>
<dbReference type="ChiTaRS" id="SKP1">
    <property type="organism name" value="human"/>
</dbReference>
<dbReference type="EvolutionaryTrace" id="P63208"/>
<dbReference type="GeneWiki" id="SKP1A"/>
<dbReference type="GenomeRNAi" id="6500"/>
<dbReference type="Pharos" id="P63208">
    <property type="development level" value="Tbio"/>
</dbReference>
<dbReference type="PRO" id="PR:P63208"/>
<dbReference type="Proteomes" id="UP000005640">
    <property type="component" value="Chromosome 5"/>
</dbReference>
<dbReference type="RNAct" id="P63208">
    <property type="molecule type" value="protein"/>
</dbReference>
<dbReference type="Bgee" id="ENSG00000113558">
    <property type="expression patterns" value="Expressed in prefrontal cortex and 211 other cell types or tissues"/>
</dbReference>
<dbReference type="ExpressionAtlas" id="P63208">
    <property type="expression patterns" value="baseline and differential"/>
</dbReference>
<dbReference type="GO" id="GO:0005813">
    <property type="term" value="C:centrosome"/>
    <property type="evidence" value="ECO:0007669"/>
    <property type="project" value="Ensembl"/>
</dbReference>
<dbReference type="GO" id="GO:0031467">
    <property type="term" value="C:Cul7-RING ubiquitin ligase complex"/>
    <property type="evidence" value="ECO:0000314"/>
    <property type="project" value="UniProtKB"/>
</dbReference>
<dbReference type="GO" id="GO:0005737">
    <property type="term" value="C:cytoplasm"/>
    <property type="evidence" value="ECO:0000314"/>
    <property type="project" value="ParkinsonsUK-UCL"/>
</dbReference>
<dbReference type="GO" id="GO:0005829">
    <property type="term" value="C:cytosol"/>
    <property type="evidence" value="ECO:0000304"/>
    <property type="project" value="Reactome"/>
</dbReference>
<dbReference type="GO" id="GO:0005654">
    <property type="term" value="C:nucleoplasm"/>
    <property type="evidence" value="ECO:0000304"/>
    <property type="project" value="Reactome"/>
</dbReference>
<dbReference type="GO" id="GO:0005634">
    <property type="term" value="C:nucleus"/>
    <property type="evidence" value="ECO:0000314"/>
    <property type="project" value="ParkinsonsUK-UCL"/>
</dbReference>
<dbReference type="GO" id="GO:0031519">
    <property type="term" value="C:PcG protein complex"/>
    <property type="evidence" value="ECO:0000314"/>
    <property type="project" value="UniProtKB"/>
</dbReference>
<dbReference type="GO" id="GO:0019005">
    <property type="term" value="C:SCF ubiquitin ligase complex"/>
    <property type="evidence" value="ECO:0000314"/>
    <property type="project" value="UniProtKB"/>
</dbReference>
<dbReference type="GO" id="GO:0008013">
    <property type="term" value="F:beta-catenin binding"/>
    <property type="evidence" value="ECO:0000314"/>
    <property type="project" value="ParkinsonsUK-UCL"/>
</dbReference>
<dbReference type="GO" id="GO:0097602">
    <property type="term" value="F:cullin family protein binding"/>
    <property type="evidence" value="ECO:0000353"/>
    <property type="project" value="ParkinsonsUK-UCL"/>
</dbReference>
<dbReference type="GO" id="GO:1990444">
    <property type="term" value="F:F-box domain binding"/>
    <property type="evidence" value="ECO:0000353"/>
    <property type="project" value="ParkinsonsUK-UCL"/>
</dbReference>
<dbReference type="GO" id="GO:0140677">
    <property type="term" value="F:molecular function activator activity"/>
    <property type="evidence" value="ECO:0000314"/>
    <property type="project" value="UniProt"/>
</dbReference>
<dbReference type="GO" id="GO:0019904">
    <property type="term" value="F:protein domain specific binding"/>
    <property type="evidence" value="ECO:0000353"/>
    <property type="project" value="CAFA"/>
</dbReference>
<dbReference type="GO" id="GO:0160072">
    <property type="term" value="F:ubiquitin ligase complex scaffold activity"/>
    <property type="evidence" value="ECO:0000314"/>
    <property type="project" value="UniProt"/>
</dbReference>
<dbReference type="GO" id="GO:1990756">
    <property type="term" value="F:ubiquitin-like ligase-substrate adaptor activity"/>
    <property type="evidence" value="ECO:0000314"/>
    <property type="project" value="ParkinsonsUK-UCL"/>
</dbReference>
<dbReference type="GO" id="GO:0006338">
    <property type="term" value="P:chromatin remodeling"/>
    <property type="evidence" value="ECO:0000314"/>
    <property type="project" value="UniProtKB"/>
</dbReference>
<dbReference type="GO" id="GO:0051457">
    <property type="term" value="P:maintenance of protein location in nucleus"/>
    <property type="evidence" value="ECO:0000353"/>
    <property type="project" value="ParkinsonsUK-UCL"/>
</dbReference>
<dbReference type="GO" id="GO:1904668">
    <property type="term" value="P:positive regulation of ubiquitin protein ligase activity"/>
    <property type="evidence" value="ECO:0000314"/>
    <property type="project" value="ParkinsonsUK-UCL"/>
</dbReference>
<dbReference type="GO" id="GO:0043161">
    <property type="term" value="P:proteasome-mediated ubiquitin-dependent protein catabolic process"/>
    <property type="evidence" value="ECO:0000314"/>
    <property type="project" value="UniProt"/>
</dbReference>
<dbReference type="GO" id="GO:0070936">
    <property type="term" value="P:protein K48-linked ubiquitination"/>
    <property type="evidence" value="ECO:0000314"/>
    <property type="project" value="UniProt"/>
</dbReference>
<dbReference type="GO" id="GO:0006513">
    <property type="term" value="P:protein monoubiquitination"/>
    <property type="evidence" value="ECO:0007669"/>
    <property type="project" value="Ensembl"/>
</dbReference>
<dbReference type="GO" id="GO:0000209">
    <property type="term" value="P:protein polyubiquitination"/>
    <property type="evidence" value="ECO:0000314"/>
    <property type="project" value="ParkinsonsUK-UCL"/>
</dbReference>
<dbReference type="GO" id="GO:0016567">
    <property type="term" value="P:protein ubiquitination"/>
    <property type="evidence" value="ECO:0000314"/>
    <property type="project" value="UniProtKB"/>
</dbReference>
<dbReference type="GO" id="GO:0031146">
    <property type="term" value="P:SCF-dependent proteasomal ubiquitin-dependent protein catabolic process"/>
    <property type="evidence" value="ECO:0000314"/>
    <property type="project" value="UniProtKB"/>
</dbReference>
<dbReference type="CDD" id="cd18322">
    <property type="entry name" value="BTB_POZ_SKP1"/>
    <property type="match status" value="1"/>
</dbReference>
<dbReference type="FunFam" id="3.30.710.10:FF:000270">
    <property type="entry name" value="S-phase kinase-associated protein 1"/>
    <property type="match status" value="1"/>
</dbReference>
<dbReference type="Gene3D" id="3.30.710.10">
    <property type="entry name" value="Potassium Channel Kv1.1, Chain A"/>
    <property type="match status" value="1"/>
</dbReference>
<dbReference type="InterPro" id="IPR016897">
    <property type="entry name" value="SKP1"/>
</dbReference>
<dbReference type="InterPro" id="IPR001232">
    <property type="entry name" value="SKP1-like"/>
</dbReference>
<dbReference type="InterPro" id="IPR036296">
    <property type="entry name" value="SKP1-like_dim_sf"/>
</dbReference>
<dbReference type="InterPro" id="IPR011333">
    <property type="entry name" value="SKP1/BTB/POZ_sf"/>
</dbReference>
<dbReference type="InterPro" id="IPR016072">
    <property type="entry name" value="Skp1_comp_dimer"/>
</dbReference>
<dbReference type="InterPro" id="IPR016073">
    <property type="entry name" value="Skp1_comp_POZ"/>
</dbReference>
<dbReference type="PANTHER" id="PTHR11165">
    <property type="entry name" value="SKP1"/>
    <property type="match status" value="1"/>
</dbReference>
<dbReference type="Pfam" id="PF01466">
    <property type="entry name" value="Skp1"/>
    <property type="match status" value="1"/>
</dbReference>
<dbReference type="Pfam" id="PF03931">
    <property type="entry name" value="Skp1_POZ"/>
    <property type="match status" value="1"/>
</dbReference>
<dbReference type="PIRSF" id="PIRSF028729">
    <property type="entry name" value="E3_ubiquit_lig_SCF_Skp"/>
    <property type="match status" value="1"/>
</dbReference>
<dbReference type="SMART" id="SM00512">
    <property type="entry name" value="Skp1"/>
    <property type="match status" value="1"/>
</dbReference>
<dbReference type="SUPFAM" id="SSF54695">
    <property type="entry name" value="POZ domain"/>
    <property type="match status" value="1"/>
</dbReference>
<dbReference type="SUPFAM" id="SSF81382">
    <property type="entry name" value="Skp1 dimerisation domain-like"/>
    <property type="match status" value="1"/>
</dbReference>
<proteinExistence type="evidence at protein level"/>
<protein>
    <recommendedName>
        <fullName>S-phase kinase-associated protein 1</fullName>
    </recommendedName>
    <alternativeName>
        <fullName>Cyclin-A/CDK2-associated protein p19</fullName>
        <shortName>p19A</shortName>
    </alternativeName>
    <alternativeName>
        <fullName>Organ of Corti protein 2</fullName>
        <shortName>OCP-2</shortName>
    </alternativeName>
    <alternativeName>
        <fullName>Organ of Corti protein II</fullName>
        <shortName>OCP-II</shortName>
    </alternativeName>
    <alternativeName>
        <fullName>RNA polymerase II elongation factor-like protein</fullName>
    </alternativeName>
    <alternativeName>
        <fullName>SIII</fullName>
    </alternativeName>
    <alternativeName>
        <fullName>Transcription elongation factor B polypeptide 1-like</fullName>
    </alternativeName>
    <alternativeName>
        <fullName>p19skp1</fullName>
    </alternativeName>
</protein>
<comment type="function">
    <text evidence="6 11 13 14 16 18 23 24">Essential component of the SCF (SKP1-CUL1-F-box protein) ubiquitin ligase complex, which mediates the ubiquitination of proteins involved in cell cycle progression, signal transduction and transcription. In the SCF complex, serves as an adapter that links the F-box protein to CUL1. The functional specificity of the SCF complex depends on the F-box protein as substrate recognition component. SCF(BTRC) and SCF(FBXW11) direct ubiquitination of CTNNB1 and participate in Wnt signaling. SCF(FBXW11) directs ubiquitination of phosphorylated NFKBIA. SCF(BTRC) directs ubiquitination of NFKBIB, NFKBIE, ATF4, SMAD3, SMAD4, CDC25A, FBXO5, CEP68 and probably NFKB2 (PubMed:25704143). SCF(SKP2) directs ubiquitination of phosphorylated CDKN1B/p27kip and is involved in regulation of G1/S transition. SCF(SKP2) directs ubiquitination of ORC1, CDT1, RBL2, ELF4, CDKN1A, RAG2, FOXO1A, and probably MYC and TAL1. SCF(FBXW7) directs ubiquitination of cyclin E, NOTCH1 released notch intracellular domain (NICD), and probably PSEN1. SCF(FBXW2) directs ubiquitination of GCM1. SCF(FBXO32) directs ubiquitination of MYOD1. SCF(FBXO7) directs ubiquitination of BIRC2 and DLGAP5. SCF(FBXO33) directs ubiquitination of YBX1. SCF(FBXO11) directs ubiquitination of BCL6 and DTL but does not seem to direct ubiquitination of TP53. SCF(BTRC) mediates the ubiquitination of NFKBIA at 'Lys-21' and 'Lys-22'; the degradation frees the associated NFKB1-RELA dimer to translocate into the nucleus and to activate transcription. SCF(CCNF) directs ubiquitination of CCP110. SCF(FBXL3) and SCF(FBXL21) direct ubiquitination of CRY1 and CRY2. SCF(FBXO9) directs ubiquitination of TTI1 and TELO2. SCF(FBXO10) directs ubiquitination of BCL2. Core component of the Cul7-RING(FBXW8) ubiquitin ligase complex, which mediates the ubiquitination and subsequent proteasomal degradation of target proteins (PubMed:35982156). Also acts as a core component of the Cul1-RING(FBXL4) ubiquitin ligase complex, which mediates the ubiquitination and subsequent proteasomal degradation of BNIP3 and BNI3L (PubMed:36896912).</text>
</comment>
<comment type="pathway">
    <text>Protein modification; protein ubiquitination.</text>
</comment>
<comment type="subunit">
    <text evidence="1 3 4 5 6 7 8 9 10 11 12 13 14 15 17 18 19 21 22 23 24 25 26">Interacts with KDM2B, forming heterodimers (PubMed:27568929). The KDM2B-SKP1 heterodimeric complex interacts with the PCGF1-BCORL heterodimeric complex to form a homotetrameric polycomb repression complex 1 (PRC1.1) (PubMed:27568929). Component of multiple SCF (SKP1-CUL1-F-box) E3 ubiquitin-protein ligase complexes formed of CUL1, SKP1, RBX1 and a variable F-box domain-containing protein as substrate-specific subunit (PubMed:31413110). Component of the SCF(FBXW11) complex containing FBXW11. Component of the SCF(SKP2) complex containing SKP2, in which it interacts directly with SKP1, SKP2 and RBX1. Component of the SCF(FBXW2) complex containing FBXW2. Component of the SCF(FBXO32) complex containing FBXO32. Component of the probable SCF(FBXO7) complex containing FBXO7. Component of the SCF(FBXO10) complex containing FBXO10. Component of the SCF(FBXO11) complex containing FBXO11. Component of the SCF(FBXO25) complex containing FBXO25. Component of the SCF(FBXO33) complex containing FBXO33. Component of the probable SCF(FBXO4) complex containing FBXO4. Component of the SCF(FBXO44) complex, composed of SKP1, CUL1 and FBXO44. Component of the SCF(BTRC) complex, composed of SKP1, CUL1 and BTRC. This complex binds phosphorylated NFKBIA. Part of a SCF complex consisting of CUL1, RBX1, SKP1 and FBXO2. Component of a SCF(SKP2)-like complex containing CUL1, SKP1, TRIM21 and SKP2. Component of the SCF(FBXO17) complex, composed of SKP1, CUL1 and FBXO17. Component of the SCF(FBXO27) complex, composed of SKP1, CUL1 and FBXO27. Component of the SCF(CCNF) complex consisting of CUL1, RBX1, SKP1 and CCNF. Component of the SCF(FBXL3) complex composed of CUL1, SKP1, RBX1 and FBXL3. Component of the SCF(FBXL21) complex composed of CUL1, SKP1, RBX1 and FBXL21. Component of the SCF(FBXO9) composed of CUL1, SKP1, RBX1 and FBXO9. Component of the SCF(FBXW7) composed of CUL1, SKP1, RBX1 and FBXW7 (PubMed:28727686). Component of the SCF(FBXO31) complex composed of CUL1, SKP1, RBX1 and FBXO31 (PubMed:39880951). Interacts with CEP68 (PubMed:25503564). Interacts with NOTCH2 (PubMed:29149593). Interacts with FBXW15 (By similarity). The SKP1-KDM2A and SKP1-KDM2B complexes interact with UBB (PubMed:30033217). Component of the Cul7-RING(FBXW8) complex consisting of CUL7, RBX1, SKP1 and FBXW8; within the complex interacts with FBXW8 (PubMed:35982156). Interacts with BCORL1 (PubMed:38342987). Interacts with FBXL4 (PubMed:36896912).</text>
</comment>
<comment type="subunit">
    <text evidence="20">(Microbial infection) Interacts with vaccinia virus protein C9L.</text>
</comment>
<comment type="interaction">
    <interactant intactId="EBI-307486">
        <id>P63208</id>
    </interactant>
    <interactant intactId="EBI-744859">
        <id>Q96IX9</id>
        <label>ANKRD36BP1</label>
    </interactant>
    <organismsDiffer>false</organismsDiffer>
    <experiments>3</experiments>
</comment>
<comment type="interaction">
    <interactant intactId="EBI-307486">
        <id>P63208</id>
    </interactant>
    <interactant intactId="EBI-359248">
        <id>Q96GX9</id>
        <label>APIP</label>
    </interactant>
    <organismsDiffer>false</organismsDiffer>
    <experiments>3</experiments>
</comment>
<comment type="interaction">
    <interactant intactId="EBI-307486">
        <id>P63208</id>
    </interactant>
    <interactant intactId="EBI-930964">
        <id>P54253</id>
        <label>ATXN1</label>
    </interactant>
    <organismsDiffer>false</organismsDiffer>
    <experiments>6</experiments>
</comment>
<comment type="interaction">
    <interactant intactId="EBI-307486">
        <id>P63208</id>
    </interactant>
    <interactant intactId="EBI-307461">
        <id>Q9Y297</id>
        <label>BTRC</label>
    </interactant>
    <organismsDiffer>false</organismsDiffer>
    <experiments>24</experiments>
</comment>
<comment type="interaction">
    <interactant intactId="EBI-307486">
        <id>P63208</id>
    </interactant>
    <interactant intactId="EBI-1207574">
        <id>P41002</id>
        <label>CCNF</label>
    </interactant>
    <organismsDiffer>false</organismsDiffer>
    <experiments>9</experiments>
</comment>
<comment type="interaction">
    <interactant intactId="EBI-307486">
        <id>P63208</id>
    </interactant>
    <interactant intactId="EBI-375077">
        <id>P38936</id>
        <label>CDKN1A</label>
    </interactant>
    <organismsDiffer>false</organismsDiffer>
    <experiments>3</experiments>
</comment>
<comment type="interaction">
    <interactant intactId="EBI-307486">
        <id>P63208</id>
    </interactant>
    <interactant intactId="EBI-359390">
        <id>Q13616</id>
        <label>CUL1</label>
    </interactant>
    <organismsDiffer>false</organismsDiffer>
    <experiments>20</experiments>
</comment>
<comment type="interaction">
    <interactant intactId="EBI-307486">
        <id>P63208</id>
    </interactant>
    <interactant intactId="EBI-719790">
        <id>Q9NXK8</id>
        <label>FBXL12</label>
    </interactant>
    <organismsDiffer>false</organismsDiffer>
    <experiments>10</experiments>
</comment>
<comment type="interaction">
    <interactant intactId="EBI-307486">
        <id>P63208</id>
    </interactant>
    <interactant intactId="EBI-6425532">
        <id>Q8N1E6</id>
        <label>FBXL14</label>
    </interactant>
    <organismsDiffer>false</organismsDiffer>
    <experiments>6</experiments>
</comment>
<comment type="interaction">
    <interactant intactId="EBI-307486">
        <id>P63208</id>
    </interactant>
    <interactant intactId="EBI-8835653">
        <id>Q9UF56</id>
        <label>FBXL17</label>
    </interactant>
    <organismsDiffer>false</organismsDiffer>
    <experiments>16</experiments>
</comment>
<comment type="interaction">
    <interactant intactId="EBI-307486">
        <id>P63208</id>
    </interactant>
    <interactant intactId="EBI-724253">
        <id>Q9UKC9</id>
        <label>FBXL2</label>
    </interactant>
    <organismsDiffer>false</organismsDiffer>
    <experiments>9</experiments>
</comment>
<comment type="interaction">
    <interactant intactId="EBI-307486">
        <id>P63208</id>
    </interactant>
    <interactant intactId="EBI-8835647">
        <id>Q96IG2</id>
        <label>FBXL20</label>
    </interactant>
    <organismsDiffer>false</organismsDiffer>
    <experiments>7</experiments>
</comment>
<comment type="interaction">
    <interactant intactId="EBI-307486">
        <id>P63208</id>
    </interactant>
    <interactant intactId="EBI-24224082">
        <id>Q6P050</id>
        <label>FBXL22</label>
    </interactant>
    <organismsDiffer>false</organismsDiffer>
    <experiments>7</experiments>
</comment>
<comment type="interaction">
    <interactant intactId="EBI-307486">
        <id>P63208</id>
    </interactant>
    <interactant intactId="EBI-2692340">
        <id>Q9UKA1</id>
        <label>FBXL5</label>
    </interactant>
    <organismsDiffer>false</organismsDiffer>
    <experiments>15</experiments>
</comment>
<comment type="interaction">
    <interactant intactId="EBI-307486">
        <id>P63208</id>
    </interactant>
    <interactant intactId="EBI-2322696">
        <id>Q8N531</id>
        <label>FBXL6</label>
    </interactant>
    <organismsDiffer>false</organismsDiffer>
    <experiments>3</experiments>
</comment>
<comment type="interaction">
    <interactant intactId="EBI-307486">
        <id>P63208</id>
    </interactant>
    <interactant intactId="EBI-2321097">
        <id>Q96CD0</id>
        <label>FBXL8</label>
    </interactant>
    <organismsDiffer>false</organismsDiffer>
    <experiments>17</experiments>
</comment>
<comment type="interaction">
    <interactant intactId="EBI-307486">
        <id>P63208</id>
    </interactant>
    <interactant intactId="EBI-1047804">
        <id>Q86XK2</id>
        <label>FBXO11</label>
    </interactant>
    <organismsDiffer>false</organismsDiffer>
    <experiments>11</experiments>
</comment>
<comment type="interaction">
    <interactant intactId="EBI-307486">
        <id>P63208</id>
    </interactant>
    <interactant intactId="EBI-2510157">
        <id>Q96EF6</id>
        <label>FBXO17</label>
    </interactant>
    <organismsDiffer>false</organismsDiffer>
    <experiments>19</experiments>
</comment>
<comment type="interaction">
    <interactant intactId="EBI-307486">
        <id>P63208</id>
    </interactant>
    <interactant intactId="EBI-4287196">
        <id>Q9UK22</id>
        <label>FBXO2</label>
    </interactant>
    <organismsDiffer>false</organismsDiffer>
    <experiments>14</experiments>
</comment>
<comment type="interaction">
    <interactant intactId="EBI-307486">
        <id>P63208</id>
    </interactant>
    <interactant intactId="EBI-311435">
        <id>O94952</id>
        <label>FBXO21</label>
    </interactant>
    <organismsDiffer>false</organismsDiffer>
    <experiments>10</experiments>
</comment>
<comment type="interaction">
    <interactant intactId="EBI-307486">
        <id>P63208</id>
    </interactant>
    <interactant intactId="EBI-2510137">
        <id>Q8NEZ5</id>
        <label>FBXO22</label>
    </interactant>
    <organismsDiffer>false</organismsDiffer>
    <experiments>10</experiments>
</comment>
<comment type="interaction">
    <interactant intactId="EBI-307486">
        <id>P63208</id>
    </interactant>
    <interactant intactId="EBI-6262578">
        <id>Q8TCJ0-3</id>
        <label>FBXO25</label>
    </interactant>
    <organismsDiffer>false</organismsDiffer>
    <experiments>4</experiments>
</comment>
<comment type="interaction">
    <interactant intactId="EBI-307486">
        <id>P63208</id>
    </interactant>
    <interactant intactId="EBI-6425694">
        <id>Q8NI29</id>
        <label>FBXO27</label>
    </interactant>
    <organismsDiffer>false</organismsDiffer>
    <experiments>3</experiments>
</comment>
<comment type="interaction">
    <interactant intactId="EBI-307486">
        <id>P63208</id>
    </interactant>
    <interactant intactId="EBI-740282">
        <id>Q9NVF7</id>
        <label>FBXO28</label>
    </interactant>
    <organismsDiffer>false</organismsDiffer>
    <experiments>14</experiments>
</comment>
<comment type="interaction">
    <interactant intactId="EBI-307486">
        <id>P63208</id>
    </interactant>
    <interactant intactId="EBI-2509901">
        <id>Q9UK99</id>
        <label>FBXO3</label>
    </interactant>
    <organismsDiffer>false</organismsDiffer>
    <experiments>12</experiments>
</comment>
<comment type="interaction">
    <interactant intactId="EBI-307486">
        <id>P63208</id>
    </interactant>
    <interactant intactId="EBI-6162477">
        <id>Q5XUX0</id>
        <label>FBXO31</label>
    </interactant>
    <organismsDiffer>false</organismsDiffer>
    <experiments>4</experiments>
</comment>
<comment type="interaction">
    <interactant intactId="EBI-307486">
        <id>P63208</id>
    </interactant>
    <interactant intactId="EBI-8555452">
        <id>Q7Z6M2</id>
        <label>FBXO33</label>
    </interactant>
    <organismsDiffer>false</organismsDiffer>
    <experiments>5</experiments>
</comment>
<comment type="interaction">
    <interactant intactId="EBI-307486">
        <id>P63208</id>
    </interactant>
    <interactant intactId="EBI-960409">
        <id>Q9UKT5</id>
        <label>FBXO4</label>
    </interactant>
    <organismsDiffer>false</organismsDiffer>
    <experiments>19</experiments>
</comment>
<comment type="interaction">
    <interactant intactId="EBI-307486">
        <id>P63208</id>
    </interactant>
    <interactant intactId="EBI-12053217">
        <id>Q4G163</id>
        <label>FBXO43</label>
    </interactant>
    <organismsDiffer>false</organismsDiffer>
    <experiments>3</experiments>
</comment>
<comment type="interaction">
    <interactant intactId="EBI-307486">
        <id>P63208</id>
    </interactant>
    <interactant intactId="EBI-2322644">
        <id>Q9H4M3</id>
        <label>FBXO44</label>
    </interactant>
    <organismsDiffer>false</organismsDiffer>
    <experiments>8</experiments>
</comment>
<comment type="interaction">
    <interactant intactId="EBI-307486">
        <id>P63208</id>
    </interactant>
    <interactant intactId="EBI-12104696">
        <id>Q9H4M3-2</id>
        <label>FBXO44</label>
    </interactant>
    <organismsDiffer>false</organismsDiffer>
    <experiments>6</experiments>
</comment>
<comment type="interaction">
    <interactant intactId="EBI-307486">
        <id>P63208</id>
    </interactant>
    <interactant intactId="EBI-2322982">
        <id>Q6PJ61</id>
        <label>FBXO46</label>
    </interactant>
    <organismsDiffer>false</organismsDiffer>
    <experiments>7</experiments>
</comment>
<comment type="interaction">
    <interactant intactId="EBI-307486">
        <id>P63208</id>
    </interactant>
    <interactant intactId="EBI-11961122">
        <id>Q5FWF7</id>
        <label>FBXO48</label>
    </interactant>
    <organismsDiffer>false</organismsDiffer>
    <experiments>5</experiments>
</comment>
<comment type="interaction">
    <interactant intactId="EBI-307486">
        <id>P63208</id>
    </interactant>
    <interactant intactId="EBI-852298">
        <id>Q9UKT4</id>
        <label>FBXO5</label>
    </interactant>
    <organismsDiffer>false</organismsDiffer>
    <experiments>8</experiments>
</comment>
<comment type="interaction">
    <interactant intactId="EBI-307486">
        <id>P63208</id>
    </interactant>
    <interactant intactId="EBI-3938499">
        <id>Q9NRD1</id>
        <label>FBXO6</label>
    </interactant>
    <organismsDiffer>false</organismsDiffer>
    <experiments>9</experiments>
</comment>
<comment type="interaction">
    <interactant intactId="EBI-307486">
        <id>P63208</id>
    </interactant>
    <interactant intactId="EBI-1161222">
        <id>Q9Y3I1</id>
        <label>FBXO7</label>
    </interactant>
    <organismsDiffer>false</organismsDiffer>
    <experiments>11</experiments>
</comment>
<comment type="interaction">
    <interactant intactId="EBI-307486">
        <id>P63208</id>
    </interactant>
    <interactant intactId="EBI-2869927">
        <id>Q9UK97</id>
        <label>FBXO9</label>
    </interactant>
    <organismsDiffer>false</organismsDiffer>
    <experiments>5</experiments>
</comment>
<comment type="interaction">
    <interactant intactId="EBI-307486">
        <id>P63208</id>
    </interactant>
    <interactant intactId="EBI-11023199">
        <id>Q9UK97-2</id>
        <label>FBXO9</label>
    </interactant>
    <organismsDiffer>false</organismsDiffer>
    <experiments>3</experiments>
</comment>
<comment type="interaction">
    <interactant intactId="EBI-307486">
        <id>P63208</id>
    </interactant>
    <interactant intactId="EBI-355189">
        <id>Q9UKB1</id>
        <label>FBXW11</label>
    </interactant>
    <organismsDiffer>false</organismsDiffer>
    <experiments>13</experiments>
</comment>
<comment type="interaction">
    <interactant intactId="EBI-307486">
        <id>P63208</id>
    </interactant>
    <interactant intactId="EBI-914727">
        <id>Q9UKT8</id>
        <label>FBXW2</label>
    </interactant>
    <organismsDiffer>false</organismsDiffer>
    <experiments>7</experiments>
</comment>
<comment type="interaction">
    <interactant intactId="EBI-307486">
        <id>P63208</id>
    </interactant>
    <interactant intactId="EBI-2372268">
        <id>P57775</id>
        <label>FBXW4</label>
    </interactant>
    <organismsDiffer>false</organismsDiffer>
    <experiments>3</experiments>
</comment>
<comment type="interaction">
    <interactant intactId="EBI-307486">
        <id>P63208</id>
    </interactant>
    <interactant intactId="EBI-741068">
        <id>Q969U6</id>
        <label>FBXW5</label>
    </interactant>
    <organismsDiffer>false</organismsDiffer>
    <experiments>7</experiments>
</comment>
<comment type="interaction">
    <interactant intactId="EBI-307486">
        <id>P63208</id>
    </interactant>
    <interactant intactId="EBI-359574">
        <id>Q969H0</id>
        <label>FBXW7</label>
    </interactant>
    <organismsDiffer>false</organismsDiffer>
    <experiments>11</experiments>
</comment>
<comment type="interaction">
    <interactant intactId="EBI-307486">
        <id>P63208</id>
    </interactant>
    <interactant intactId="EBI-914770">
        <id>Q8N3Y1</id>
        <label>FBXW8</label>
    </interactant>
    <organismsDiffer>false</organismsDiffer>
    <experiments>5</experiments>
</comment>
<comment type="interaction">
    <interactant intactId="EBI-307486">
        <id>P63208</id>
    </interactant>
    <interactant intactId="EBI-2322729">
        <id>Q5XUX1</id>
        <label>FBXW9</label>
    </interactant>
    <organismsDiffer>false</organismsDiffer>
    <experiments>7</experiments>
</comment>
<comment type="interaction">
    <interactant intactId="EBI-307486">
        <id>P63208</id>
    </interactant>
    <interactant intactId="EBI-4397613">
        <id>Q7L273</id>
        <label>KCTD9</label>
    </interactant>
    <organismsDiffer>false</organismsDiffer>
    <experiments>3</experiments>
</comment>
<comment type="interaction">
    <interactant intactId="EBI-307486">
        <id>P63208</id>
    </interactant>
    <interactant intactId="EBI-765758">
        <id>Q9Y2K7</id>
        <label>KDM2A</label>
    </interactant>
    <organismsDiffer>false</organismsDiffer>
    <experiments>6</experiments>
</comment>
<comment type="interaction">
    <interactant intactId="EBI-307486">
        <id>P63208</id>
    </interactant>
    <interactant intactId="EBI-3955564">
        <id>Q8NHM5</id>
        <label>KDM2B</label>
    </interactant>
    <organismsDiffer>false</organismsDiffer>
    <experiments>8</experiments>
</comment>
<comment type="interaction">
    <interactant intactId="EBI-307486">
        <id>P63208</id>
    </interactant>
    <interactant intactId="EBI-739696">
        <id>P25791</id>
        <label>LMO2</label>
    </interactant>
    <organismsDiffer>false</organismsDiffer>
    <experiments>3</experiments>
</comment>
<comment type="interaction">
    <interactant intactId="EBI-307486">
        <id>P63208</id>
    </interactant>
    <interactant intactId="EBI-16439278">
        <id>Q6FHY5</id>
        <label>MEOX2</label>
    </interactant>
    <organismsDiffer>false</organismsDiffer>
    <experiments>3</experiments>
</comment>
<comment type="interaction">
    <interactant intactId="EBI-307486">
        <id>P63208</id>
    </interactant>
    <interactant intactId="EBI-18051665">
        <id>Q9ULD2-3</id>
        <label>MTUS1</label>
    </interactant>
    <organismsDiffer>false</organismsDiffer>
    <experiments>3</experiments>
</comment>
<comment type="interaction">
    <interactant intactId="EBI-307486">
        <id>P63208</id>
    </interactant>
    <interactant intactId="EBI-7982457">
        <id>Q14901</id>
        <label>MYC</label>
    </interactant>
    <organismsDiffer>false</organismsDiffer>
    <experiments>2</experiments>
</comment>
<comment type="interaction">
    <interactant intactId="EBI-307486">
        <id>P63208</id>
    </interactant>
    <interactant intactId="EBI-357253">
        <id>P62136</id>
        <label>PPP1CA</label>
    </interactant>
    <organismsDiffer>false</organismsDiffer>
    <experiments>4</experiments>
</comment>
<comment type="interaction">
    <interactant intactId="EBI-307486">
        <id>P63208</id>
    </interactant>
    <interactant intactId="EBI-456291">
        <id>Q13309</id>
        <label>SKP2</label>
    </interactant>
    <organismsDiffer>false</organismsDiffer>
    <experiments>18</experiments>
</comment>
<comment type="interaction">
    <interactant intactId="EBI-307486">
        <id>P63208</id>
    </interactant>
    <interactant intactId="EBI-7791408">
        <id>Q13309-2</id>
        <label>SKP2</label>
    </interactant>
    <organismsDiffer>false</organismsDiffer>
    <experiments>5</experiments>
</comment>
<comment type="interaction">
    <interactant intactId="EBI-307486">
        <id>P63208</id>
    </interactant>
    <interactant intactId="EBI-10768076">
        <id>Q9Y2Z0-2</id>
        <label>SUGT1</label>
    </interactant>
    <organismsDiffer>false</organismsDiffer>
    <experiments>2</experiments>
</comment>
<comment type="interaction">
    <interactant intactId="EBI-307486">
        <id>P63208</id>
    </interactant>
    <interactant intactId="EBI-10220701">
        <id>A0A0B4J1Y2</id>
        <label>TTC21A</label>
    </interactant>
    <organismsDiffer>false</organismsDiffer>
    <experiments>3</experiments>
</comment>
<comment type="interaction">
    <interactant intactId="EBI-307486">
        <id>P63208</id>
    </interactant>
    <interactant intactId="EBI-2851213">
        <id>Q8N5M4</id>
        <label>TTC9C</label>
    </interactant>
    <organismsDiffer>false</organismsDiffer>
    <experiments>13</experiments>
</comment>
<comment type="interaction">
    <interactant intactId="EBI-307486">
        <id>P63208</id>
    </interactant>
    <interactant intactId="EBI-6898235">
        <id>Q8BFZ4</id>
        <label>Fbxl21</label>
    </interactant>
    <organismsDiffer>true</organismsDiffer>
    <experiments>3</experiments>
</comment>
<comment type="interaction">
    <interactant intactId="EBI-307486">
        <id>P63208</id>
    </interactant>
    <interactant intactId="EBI-1266589">
        <id>Q8C4V4</id>
        <label>Fbxl3</label>
    </interactant>
    <organismsDiffer>true</organismsDiffer>
    <experiments>3</experiments>
</comment>
<comment type="interaction">
    <interactant intactId="EBI-307497">
        <id>P63208-1</id>
    </interactant>
    <interactant intactId="EBI-1207574">
        <id>P41002</id>
        <label>CCNF</label>
    </interactant>
    <organismsDiffer>false</organismsDiffer>
    <experiments>6</experiments>
</comment>
<comment type="interaction">
    <interactant intactId="EBI-307497">
        <id>P63208-1</id>
    </interactant>
    <interactant intactId="EBI-1047804">
        <id>Q86XK2</id>
        <label>FBXO11</label>
    </interactant>
    <organismsDiffer>false</organismsDiffer>
    <experiments>5</experiments>
</comment>
<comment type="interaction">
    <interactant intactId="EBI-307497">
        <id>P63208-1</id>
    </interactant>
    <interactant intactId="EBI-16031873">
        <id>Q969U6-1</id>
        <label>FBXW5</label>
    </interactant>
    <organismsDiffer>false</organismsDiffer>
    <experiments>3</experiments>
</comment>
<comment type="interaction">
    <interactant intactId="EBI-307497">
        <id>P63208-1</id>
    </interactant>
    <interactant intactId="EBI-359574">
        <id>Q969H0</id>
        <label>FBXW7</label>
    </interactant>
    <organismsDiffer>false</organismsDiffer>
    <experiments>2</experiments>
</comment>
<comment type="interaction">
    <interactant intactId="EBI-307497">
        <id>P63208-1</id>
    </interactant>
    <interactant intactId="EBI-394678">
        <id>Q13503</id>
        <label>MED21</label>
    </interactant>
    <organismsDiffer>false</organismsDiffer>
    <experiments>5</experiments>
</comment>
<comment type="interaction">
    <interactant intactId="EBI-307497">
        <id>P63208-1</id>
    </interactant>
    <interactant intactId="EBI-15490084">
        <id>Q13309-1</id>
        <label>SKP2</label>
    </interactant>
    <organismsDiffer>false</organismsDiffer>
    <experiments>7</experiments>
</comment>
<comment type="interaction">
    <interactant intactId="EBI-307497">
        <id>P63208-1</id>
    </interactant>
    <interactant intactId="EBI-2314714">
        <id>Q80UW2</id>
        <label>Fbxo2</label>
    </interactant>
    <organismsDiffer>true</organismsDiffer>
    <experiments>4</experiments>
</comment>
<comment type="interaction">
    <interactant intactId="EBI-307497">
        <id>P63208-1</id>
    </interactant>
    <interactant intactId="EBI-15718764">
        <id>Q6TVJ2</id>
    </interactant>
    <organismsDiffer>true</organismsDiffer>
    <experiments>2</experiments>
</comment>
<comment type="interaction">
    <interactant intactId="EBI-307497">
        <id>P63208-1</id>
    </interactant>
    <interactant intactId="EBI-15718558">
        <id>Q6TVJ4</id>
    </interactant>
    <organismsDiffer>true</organismsDiffer>
    <experiments>2</experiments>
</comment>
<comment type="interaction">
    <interactant intactId="EBI-307497">
        <id>P63208-1</id>
    </interactant>
    <interactant intactId="EBI-15718586">
        <id>Q6TVJ7</id>
    </interactant>
    <organismsDiffer>true</organismsDiffer>
    <experiments>2</experiments>
</comment>
<comment type="interaction">
    <interactant intactId="EBI-307497">
        <id>P63208-1</id>
    </interactant>
    <interactant intactId="EBI-15718527">
        <id>Q6TVW2</id>
    </interactant>
    <organismsDiffer>true</organismsDiffer>
    <experiments>5</experiments>
</comment>
<comment type="interaction">
    <interactant intactId="EBI-25930963">
        <id>P63208-2</id>
    </interactant>
    <interactant intactId="EBI-5235340">
        <id>Q7Z699</id>
        <label>SPRED1</label>
    </interactant>
    <organismsDiffer>false</organismsDiffer>
    <experiments>3</experiments>
</comment>
<comment type="alternative products">
    <event type="alternative splicing"/>
    <isoform>
        <id>P63208-1</id>
        <id>P34991-1</id>
        <name>1</name>
        <sequence type="displayed"/>
    </isoform>
    <isoform>
        <id>P63208-2</id>
        <id>P34991-2</id>
        <name>2</name>
        <sequence type="described" ref="VSP_007555"/>
    </isoform>
</comment>
<comment type="PTM">
    <text evidence="1">Undergoes autophagy-mediated degradation in the liver in a time-dependent manner.</text>
</comment>
<comment type="similarity">
    <text evidence="29">Belongs to the SKP1 family.</text>
</comment>
<name>SKP1_HUMAN</name>
<keyword id="KW-0002">3D-structure</keyword>
<keyword id="KW-0025">Alternative splicing</keyword>
<keyword id="KW-0903">Direct protein sequencing</keyword>
<keyword id="KW-0945">Host-virus interaction</keyword>
<keyword id="KW-1017">Isopeptide bond</keyword>
<keyword id="KW-0597">Phosphoprotein</keyword>
<keyword id="KW-1267">Proteomics identification</keyword>
<keyword id="KW-1185">Reference proteome</keyword>
<keyword id="KW-0832">Ubl conjugation</keyword>
<keyword id="KW-0833">Ubl conjugation pathway</keyword>
<organism>
    <name type="scientific">Homo sapiens</name>
    <name type="common">Human</name>
    <dbReference type="NCBI Taxonomy" id="9606"/>
    <lineage>
        <taxon>Eukaryota</taxon>
        <taxon>Metazoa</taxon>
        <taxon>Chordata</taxon>
        <taxon>Craniata</taxon>
        <taxon>Vertebrata</taxon>
        <taxon>Euteleostomi</taxon>
        <taxon>Mammalia</taxon>
        <taxon>Eutheria</taxon>
        <taxon>Euarchontoglires</taxon>
        <taxon>Primates</taxon>
        <taxon>Haplorrhini</taxon>
        <taxon>Catarrhini</taxon>
        <taxon>Hominidae</taxon>
        <taxon>Homo</taxon>
    </lineage>
</organism>
<feature type="initiator methionine" description="Removed" evidence="27">
    <location>
        <position position="1"/>
    </location>
</feature>
<feature type="chain" id="PRO_0000187251" description="S-phase kinase-associated protein 1">
    <location>
        <begin position="2"/>
        <end position="163"/>
    </location>
</feature>
<feature type="region of interest" description="Disordered" evidence="2">
    <location>
        <begin position="63"/>
        <end position="83"/>
    </location>
</feature>
<feature type="region of interest" description="Interaction with the F-box domain of F-box proteins" evidence="23 48">
    <location>
        <begin position="104"/>
        <end position="163"/>
    </location>
</feature>
<feature type="modified residue" description="Phosphothreonine" evidence="49 50">
    <location>
        <position position="131"/>
    </location>
</feature>
<feature type="cross-link" description="Glycyl lysine isopeptide (Lys-Gly) (interchain with G-Cter in SUMO1)" evidence="51">
    <location>
        <position position="142"/>
    </location>
</feature>
<feature type="splice variant" id="VSP_007555" description="In isoform 2." evidence="28">
    <original>RKENQWCEEK</original>
    <variation>GSTQFCL</variation>
    <location>
        <begin position="154"/>
        <end position="163"/>
    </location>
</feature>
<feature type="strand" evidence="53">
    <location>
        <begin position="3"/>
        <end position="7"/>
    </location>
</feature>
<feature type="strand" evidence="57">
    <location>
        <begin position="9"/>
        <end position="11"/>
    </location>
</feature>
<feature type="strand" evidence="53">
    <location>
        <begin position="13"/>
        <end position="17"/>
    </location>
</feature>
<feature type="helix" evidence="53">
    <location>
        <begin position="18"/>
        <end position="22"/>
    </location>
</feature>
<feature type="helix" evidence="53">
    <location>
        <begin position="25"/>
        <end position="33"/>
    </location>
</feature>
<feature type="strand" evidence="58">
    <location>
        <begin position="38"/>
        <end position="40"/>
    </location>
</feature>
<feature type="strand" evidence="53">
    <location>
        <begin position="44"/>
        <end position="46"/>
    </location>
</feature>
<feature type="strand" evidence="54">
    <location>
        <begin position="47"/>
        <end position="50"/>
    </location>
</feature>
<feature type="helix" evidence="53">
    <location>
        <begin position="52"/>
        <end position="65"/>
    </location>
</feature>
<feature type="helix" evidence="60">
    <location>
        <begin position="70"/>
        <end position="73"/>
    </location>
</feature>
<feature type="helix" evidence="60">
    <location>
        <begin position="75"/>
        <end position="79"/>
    </location>
</feature>
<feature type="strand" evidence="56">
    <location>
        <begin position="80"/>
        <end position="82"/>
    </location>
</feature>
<feature type="strand" evidence="59">
    <location>
        <begin position="83"/>
        <end position="85"/>
    </location>
</feature>
<feature type="helix" evidence="53">
    <location>
        <begin position="87"/>
        <end position="92"/>
    </location>
</feature>
<feature type="helix" evidence="53">
    <location>
        <begin position="97"/>
        <end position="110"/>
    </location>
</feature>
<feature type="helix" evidence="53">
    <location>
        <begin position="113"/>
        <end position="127"/>
    </location>
</feature>
<feature type="strand" evidence="52">
    <location>
        <begin position="128"/>
        <end position="130"/>
    </location>
</feature>
<feature type="helix" evidence="53">
    <location>
        <begin position="132"/>
        <end position="138"/>
    </location>
</feature>
<feature type="helix" evidence="57">
    <location>
        <begin position="147"/>
        <end position="155"/>
    </location>
</feature>
<feature type="turn" evidence="55">
    <location>
        <begin position="157"/>
        <end position="159"/>
    </location>
</feature>
<accession>P63208</accession>
<accession>D3DQ97</accession>
<accession>D3DQ98</accession>
<accession>P34991</accession>
<accession>Q8TAY2</accession>
<gene>
    <name type="primary">SKP1</name>
    <name type="synonym">EMC19</name>
    <name type="synonym">OCP2</name>
    <name type="synonym">SKP1A</name>
    <name type="synonym">TCEB1L</name>
</gene>
<sequence>MPSIKLQSSDGEIFEVDVEIAKQSVTIKTMLEDLGMDDEGDDDPVPLPNVNAAILKKVIQWCTHHKDDPPPPEDDENKEKRTDDIPVWDQEFLKVDQGTLFELILAANYLDIKGLLDVTCKTVANMIKGKTPEEIRKTFNIKNDFTEEEEAQVRKENQWCEEK</sequence>
<reference key="1">
    <citation type="journal article" date="1995" name="Cell">
        <title>p19Skp1 and p45Skp2 are essential elements of the cyclin A-CDK2 S phase kinase.</title>
        <authorList>
            <person name="Zhang H."/>
            <person name="Kobayashi R."/>
            <person name="Galaktionov K."/>
            <person name="Beach D."/>
        </authorList>
    </citation>
    <scope>NUCLEOTIDE SEQUENCE [MRNA] (ISOFORM 1)</scope>
</reference>
<reference key="2">
    <citation type="journal article" date="1995" name="Genomics">
        <title>A novel cDNA with homology to an RNA polymerase II elongation factors maps to human chromosome 5q31 (TCEB1L) and to mouse chromosome 11 (Tceb1l).</title>
        <authorList>
            <person name="Sowden J."/>
            <person name="Morrison K."/>
            <person name="Schofield J."/>
            <person name="Putt W."/>
            <person name="Edwards Y."/>
        </authorList>
    </citation>
    <scope>NUCLEOTIDE SEQUENCE [MRNA] (ISOFORM 1)</scope>
</reference>
<reference key="3">
    <citation type="submission" date="2005-09" db="EMBL/GenBank/DDBJ databases">
        <authorList>
            <person name="Mural R.J."/>
            <person name="Istrail S."/>
            <person name="Sutton G.G."/>
            <person name="Florea L."/>
            <person name="Halpern A.L."/>
            <person name="Mobarry C.M."/>
            <person name="Lippert R."/>
            <person name="Walenz B."/>
            <person name="Shatkay H."/>
            <person name="Dew I."/>
            <person name="Miller J.R."/>
            <person name="Flanigan M.J."/>
            <person name="Edwards N.J."/>
            <person name="Bolanos R."/>
            <person name="Fasulo D."/>
            <person name="Halldorsson B.V."/>
            <person name="Hannenhalli S."/>
            <person name="Turner R."/>
            <person name="Yooseph S."/>
            <person name="Lu F."/>
            <person name="Nusskern D.R."/>
            <person name="Shue B.C."/>
            <person name="Zheng X.H."/>
            <person name="Zhong F."/>
            <person name="Delcher A.L."/>
            <person name="Huson D.H."/>
            <person name="Kravitz S.A."/>
            <person name="Mouchard L."/>
            <person name="Reinert K."/>
            <person name="Remington K.A."/>
            <person name="Clark A.G."/>
            <person name="Waterman M.S."/>
            <person name="Eichler E.E."/>
            <person name="Adams M.D."/>
            <person name="Hunkapiller M.W."/>
            <person name="Myers E.W."/>
            <person name="Venter J.C."/>
        </authorList>
    </citation>
    <scope>NUCLEOTIDE SEQUENCE [LARGE SCALE GENOMIC DNA]</scope>
</reference>
<reference key="4">
    <citation type="journal article" date="2004" name="Genome Res.">
        <title>The status, quality, and expansion of the NIH full-length cDNA project: the Mammalian Gene Collection (MGC).</title>
        <authorList>
            <consortium name="The MGC Project Team"/>
        </authorList>
    </citation>
    <scope>NUCLEOTIDE SEQUENCE [LARGE SCALE MRNA] (ISOFORMS 1 AND 2)</scope>
    <source>
        <tissue>Lung</tissue>
        <tissue>Skin</tissue>
        <tissue>Uterus</tissue>
    </source>
</reference>
<reference key="5">
    <citation type="submission" date="1994-02" db="UniProtKB">
        <authorList>
            <person name="Golaz O."/>
            <person name="Hughes G.J."/>
            <person name="Frutiger S."/>
            <person name="Paquet N."/>
            <person name="Bairoch A."/>
            <person name="Pasquali C."/>
            <person name="Sanchez J.-C."/>
            <person name="Tissot J.-D."/>
            <person name="Appel R.D."/>
            <person name="Walzer C."/>
            <person name="Balant L."/>
            <person name="Hochstrasser D.F."/>
        </authorList>
    </citation>
    <scope>PROTEIN SEQUENCE OF 2-11</scope>
    <source>
        <tissue>Erythrocyte</tissue>
    </source>
</reference>
<reference key="6">
    <citation type="journal article" date="2010" name="Sci. Signal.">
        <title>Quantitative phosphoproteomics reveals widespread full phosphorylation site occupancy during mitosis.</title>
        <authorList>
            <person name="Olsen J.V."/>
            <person name="Vermeulen M."/>
            <person name="Santamaria A."/>
            <person name="Kumar C."/>
            <person name="Miller M.L."/>
            <person name="Jensen L.J."/>
            <person name="Gnad F."/>
            <person name="Cox J."/>
            <person name="Jensen T.S."/>
            <person name="Nigg E.A."/>
            <person name="Brunak S."/>
            <person name="Mann M."/>
        </authorList>
    </citation>
    <scope>PHOSPHORYLATION [LARGE SCALE ANALYSIS] AT THR-131</scope>
    <scope>IDENTIFICATION BY MASS SPECTROMETRY [LARGE SCALE ANALYSIS]</scope>
    <source>
        <tissue>Cervix carcinoma</tissue>
    </source>
</reference>
<reference key="7">
    <citation type="journal article" date="2011" name="BMC Syst. Biol.">
        <title>Initial characterization of the human central proteome.</title>
        <authorList>
            <person name="Burkard T.R."/>
            <person name="Planyavsky M."/>
            <person name="Kaupe I."/>
            <person name="Breitwieser F.P."/>
            <person name="Buerckstuemmer T."/>
            <person name="Bennett K.L."/>
            <person name="Superti-Furga G."/>
            <person name="Colinge J."/>
        </authorList>
    </citation>
    <scope>IDENTIFICATION BY MASS SPECTROMETRY [LARGE SCALE ANALYSIS]</scope>
</reference>
<reference key="8">
    <citation type="journal article" date="2011" name="Sci. Signal.">
        <title>System-wide temporal characterization of the proteome and phosphoproteome of human embryonic stem cell differentiation.</title>
        <authorList>
            <person name="Rigbolt K.T."/>
            <person name="Prokhorova T.A."/>
            <person name="Akimov V."/>
            <person name="Henningsen J."/>
            <person name="Johansen P.T."/>
            <person name="Kratchmarova I."/>
            <person name="Kassem M."/>
            <person name="Mann M."/>
            <person name="Olsen J.V."/>
            <person name="Blagoev B."/>
        </authorList>
    </citation>
    <scope>PHOSPHORYLATION [LARGE SCALE ANALYSIS] AT THR-131</scope>
    <scope>IDENTIFICATION BY MASS SPECTROMETRY [LARGE SCALE ANALYSIS]</scope>
</reference>
<reference key="9">
    <citation type="journal article" date="2013" name="Proc. Natl. Acad. Sci. U.S.A.">
        <title>Related F-box proteins control cell death in Caenorhabditis elegans and human lymphoma.</title>
        <authorList>
            <person name="Chiorazzi M."/>
            <person name="Rui L."/>
            <person name="Yang Y."/>
            <person name="Ceribelli M."/>
            <person name="Tishbi N."/>
            <person name="Maurer C.W."/>
            <person name="Ranuncolo S.M."/>
            <person name="Zhao H."/>
            <person name="Xu W."/>
            <person name="Chan W.C."/>
            <person name="Jaffe E.S."/>
            <person name="Gascoyne R.D."/>
            <person name="Campo E."/>
            <person name="Rosenwald A."/>
            <person name="Ott G."/>
            <person name="Delabie J."/>
            <person name="Rimsza L.M."/>
            <person name="Shaham S."/>
            <person name="Staudt L.M."/>
        </authorList>
    </citation>
    <scope>FUNCTION IN UBIQUITINATION OF BCL2</scope>
    <scope>IDENTIFICATION IN THE SCF(FBXO10) COMPLEX</scope>
</reference>
<reference key="10">
    <citation type="journal article" date="1997" name="Gene">
        <title>Human inner ear OCP2 cDNA maps to 5q22-5q35.2 with related sequences on chromosomes 4p16.2-4p14, 5p13-5q22, 7pter-q22, 10 and 12p13-12qter.</title>
        <authorList>
            <person name="Liang Y."/>
            <person name="Chen H."/>
            <person name="Asher J.H. Jr."/>
            <person name="Chang C.-C."/>
            <person name="Friedman T.B."/>
        </authorList>
    </citation>
    <scope>NUCLEOTIDE SEQUENCE [MRNA] OF 14-163 (ISOFORM 1)</scope>
    <source>
        <tissue>Inner ear</tissue>
    </source>
</reference>
<reference key="11">
    <citation type="journal article" date="2002" name="Proc. Natl. Acad. Sci. U.S.A.">
        <title>CUL7: a DOC domain-containing cullin selectively binds Skp1.Fbx29 to form an SCF-like complex.</title>
        <authorList>
            <person name="Dias D.C."/>
            <person name="Dolios G."/>
            <person name="Wang R."/>
            <person name="Pan Z.Q."/>
        </authorList>
    </citation>
    <scope>INTERACTION WITH FBXW8</scope>
    <scope>IDENTIFICATION IN SCF-LIKE COMPLEX</scope>
</reference>
<reference key="12">
    <citation type="journal article" date="2001" name="Mol. Cell">
        <title>Siah-1, SIP, and Ebi collaborate in a novel pathway for beta-catenin degradation linked to p53 responses.</title>
        <authorList>
            <person name="Matsuzawa S."/>
            <person name="Reed J.C."/>
        </authorList>
    </citation>
    <scope>SUBUNIT OF A COMPLEX WITH SIAH1; CACYBP; UBE2D1; APC AND TBL1X</scope>
</reference>
<reference key="13">
    <citation type="journal article" date="2006" name="Mol. Cell. Biol.">
        <title>Regulation of p27 degradation and S-phase progression by Ro52 RING finger protein.</title>
        <authorList>
            <person name="Sabile A."/>
            <person name="Meyer A.M."/>
            <person name="Wirbelauer C."/>
            <person name="Hess D."/>
            <person name="Kogel U."/>
            <person name="Scheffner M."/>
            <person name="Krek W."/>
        </authorList>
    </citation>
    <scope>INTERACTION WITH THE SCF(SKP2)-LIKE COMPLEX</scope>
    <scope>INTERACTION WITH TRIM21</scope>
</reference>
<reference key="14">
    <citation type="journal article" date="2008" name="J. Biol. Chem.">
        <title>Diversity in tissue expression, substrate binding, and SCF complex formation for a lectin family of ubiquitin ligases.</title>
        <authorList>
            <person name="Glenn K.A."/>
            <person name="Nelson R.F."/>
            <person name="Wen H.M."/>
            <person name="Mallinger A.J."/>
            <person name="Paulson H.L."/>
        </authorList>
    </citation>
    <scope>INTERACTION WITH FBXO44; FBXO17 AND FBXO27</scope>
    <scope>IDENTIFICATION IN SCF-COMPLEX</scope>
</reference>
<reference key="15">
    <citation type="journal article" date="2010" name="Nature">
        <title>SCF(Cyclin F) controls centrosome homeostasis and mitotic fidelity through CP110 degradation.</title>
        <authorList>
            <person name="D'Angiolella V."/>
            <person name="Donato V."/>
            <person name="Vijayakumar S."/>
            <person name="Saraf A."/>
            <person name="Florens L."/>
            <person name="Washburn M.P."/>
            <person name="Dynlacht B."/>
            <person name="Pagano M."/>
        </authorList>
    </citation>
    <scope>IDENTIFICATION IN THE SCF(CCNF) COMPLEX</scope>
</reference>
<reference key="16">
    <citation type="journal article" date="2012" name="Nature">
        <title>FBXO11 targets BCL6 for degradation and is inactivated in diffuse large B-cell lymphomas.</title>
        <authorList>
            <person name="Duan S."/>
            <person name="Cermak L."/>
            <person name="Pagan J.K."/>
            <person name="Rossi M."/>
            <person name="Martinengo C."/>
            <person name="di Celle P.F."/>
            <person name="Chapuy B."/>
            <person name="Shipp M."/>
            <person name="Chiarle R."/>
            <person name="Pagano M."/>
        </authorList>
    </citation>
    <scope>FUNCTION IN UBIQUITINATION OF BCL6</scope>
    <scope>IDENTIFICATION IN THE SCF(FBXO11) COMPLEX</scope>
</reference>
<reference key="17">
    <citation type="journal article" date="2014" name="J. Proteomics">
        <title>An enzyme assisted RP-RPLC approach for in-depth analysis of human liver phosphoproteome.</title>
        <authorList>
            <person name="Bian Y."/>
            <person name="Song C."/>
            <person name="Cheng K."/>
            <person name="Dong M."/>
            <person name="Wang F."/>
            <person name="Huang J."/>
            <person name="Sun D."/>
            <person name="Wang L."/>
            <person name="Ye M."/>
            <person name="Zou H."/>
        </authorList>
    </citation>
    <scope>IDENTIFICATION BY MASS SPECTROMETRY [LARGE SCALE ANALYSIS]</scope>
    <source>
        <tissue>Liver</tissue>
    </source>
</reference>
<reference key="18">
    <citation type="journal article" date="2014" name="Proc. Natl. Acad. Sci. U.S.A.">
        <title>Mapping of SUMO sites and analysis of SUMOylation changes induced by external stimuli.</title>
        <authorList>
            <person name="Impens F."/>
            <person name="Radoshevich L."/>
            <person name="Cossart P."/>
            <person name="Ribet D."/>
        </authorList>
    </citation>
    <scope>SUMOYLATION [LARGE SCALE ANALYSIS] AT LYS-142</scope>
    <scope>IDENTIFICATION BY MASS SPECTROMETRY [LARGE SCALE ANALYSIS]</scope>
</reference>
<reference key="19">
    <citation type="journal article" date="2015" name="Eur. J. Cell Biol.">
        <title>Cep68 can be regulated by Nek2 and SCF complex.</title>
        <authorList>
            <person name="Man X."/>
            <person name="Megraw T.L."/>
            <person name="Lim Y.P."/>
        </authorList>
    </citation>
    <scope>FUNCTION</scope>
</reference>
<reference key="20">
    <citation type="journal article" date="2015" name="Nat. Cell Biol.">
        <title>Degradation of Cep68 and PCNT cleavage mediate Cep215 removal from the PCM to allow centriole separation, disengagement and licensing.</title>
        <authorList>
            <person name="Pagan J.K."/>
            <person name="Marzio A."/>
            <person name="Jones M.J."/>
            <person name="Saraf A."/>
            <person name="Jallepalli P.V."/>
            <person name="Florens L."/>
            <person name="Washburn M.P."/>
            <person name="Pagano M."/>
        </authorList>
    </citation>
    <scope>INTERACTION WITH CEP68</scope>
</reference>
<reference key="21">
    <citation type="journal article" date="2015" name="Proteomics">
        <title>N-terminome analysis of the human mitochondrial proteome.</title>
        <authorList>
            <person name="Vaca Jacome A.S."/>
            <person name="Rabilloud T."/>
            <person name="Schaeffer-Reiss C."/>
            <person name="Rompais M."/>
            <person name="Ayoub D."/>
            <person name="Lane L."/>
            <person name="Bairoch A."/>
            <person name="Van Dorsselaer A."/>
            <person name="Carapito C."/>
        </authorList>
    </citation>
    <scope>IDENTIFICATION BY MASS SPECTROMETRY [LARGE SCALE ANALYSIS]</scope>
</reference>
<reference key="22">
    <citation type="journal article" date="2017" name="Mol. Cell">
        <title>NOTCH2 Hajdu-Cheney mutations escape SCFFBW7-dependent proteolysis to promote osteoporosis.</title>
        <authorList>
            <person name="Fukushima H."/>
            <person name="Shimizu K."/>
            <person name="Watahiki A."/>
            <person name="Hoshikawa S."/>
            <person name="Kosho T."/>
            <person name="Oba D."/>
            <person name="Sakano S."/>
            <person name="Arakaki M."/>
            <person name="Yamada A."/>
            <person name="Nagashima K."/>
            <person name="Okabe K."/>
            <person name="Fukumoto S."/>
            <person name="Jimi E."/>
            <person name="Bigas A."/>
            <person name="Nakayama K.I."/>
            <person name="Nakayama K."/>
            <person name="Aoki Y."/>
            <person name="Wei W."/>
            <person name="Inuzuka H."/>
        </authorList>
    </citation>
    <scope>INTERACTION WITH NOTCH2</scope>
</reference>
<reference key="23">
    <citation type="journal article" date="2018" name="J. Virol.">
        <title>Vaccinia Virus C9 Ankyrin Repeat/F-Box Protein Is a Newly Identified Antagonist of the Type I Interferon-Induced Antiviral State.</title>
        <authorList>
            <person name="Liu R."/>
            <person name="Moss B."/>
        </authorList>
    </citation>
    <scope>INTERACTION WITH VACCINIA VIRUS PROTEIN C9L (MICROBIAL INFECTION)</scope>
</reference>
<reference key="24">
    <citation type="journal article" date="2019" name="J. Biol. Chem.">
        <title>The tumor suppressor FBXO31 preserves genomic integrity by regulating DNA replication and segregation through precise control of cyclin A levels.</title>
        <authorList>
            <person name="Dutta P."/>
            <person name="Islam S."/>
            <person name="Choppara S."/>
            <person name="Sengupta P."/>
            <person name="Kumar A."/>
            <person name="Kumar A."/>
            <person name="Wani M.R."/>
            <person name="Chatterjee S."/>
            <person name="Santra M.K."/>
        </authorList>
    </citation>
    <scope>IDENTIFICATION IN A SCF PROTEIN LIGASE COMPLEX</scope>
</reference>
<reference key="25">
    <citation type="journal article" date="2023" name="EMBO J.">
        <title>A mitochondrial SCF-FBXL4 ubiquitin E3 ligase complex degrades BNIP3 and NIX to restrain mitophagy and prevent mitochondrial disease.</title>
        <authorList>
            <person name="Cao Y."/>
            <person name="Zheng J."/>
            <person name="Wan H."/>
            <person name="Sun Y."/>
            <person name="Fu S."/>
            <person name="Liu S."/>
            <person name="He B."/>
            <person name="Cai G."/>
            <person name="Cao Y."/>
            <person name="Huang H."/>
            <person name="Li Q."/>
            <person name="Ma Y."/>
            <person name="Chen S."/>
            <person name="Wang F."/>
            <person name="Jiang H."/>
        </authorList>
    </citation>
    <scope>FUNCTION</scope>
    <scope>INTERACTION WITH FBXL4</scope>
</reference>
<reference key="26">
    <citation type="journal article" date="2024" name="Clin. Genet.">
        <title>A hemizygous loss-of-function variant in BCORL1 is associated with male infertility and oligoasthenoteratozoospermia.</title>
        <authorList>
            <person name="Luo C."/>
            <person name="Chen Z."/>
            <person name="Meng L."/>
            <person name="Tan C."/>
            <person name="He W."/>
            <person name="Tu C."/>
            <person name="Du J."/>
            <person name="Lu G.X."/>
            <person name="Lin G."/>
            <person name="Tan Y.Q."/>
            <person name="Hu T.Y."/>
        </authorList>
    </citation>
    <scope>INTERACTION WITH BCORL1</scope>
</reference>
<reference key="27">
    <citation type="journal article" date="2025" name="Nature">
        <title>C-terminal amides mark proteins for degradation via SCF-FBXO31.</title>
        <authorList>
            <person name="Muhar M.F."/>
            <person name="Farnung J."/>
            <person name="Cernakova M."/>
            <person name="Hofmann R."/>
            <person name="Henneberg L.T."/>
            <person name="Pfleiderer M.M."/>
            <person name="Denoth-Lippuner A."/>
            <person name="Kalcic F."/>
            <person name="Nievergelt A.S."/>
            <person name="Peters Al-Bayati M."/>
            <person name="Sidiropoulos N.D."/>
            <person name="Beier V."/>
            <person name="Mann M."/>
            <person name="Jessberger S."/>
            <person name="Jinek M."/>
            <person name="Schulman B.A."/>
            <person name="Bode J.W."/>
            <person name="Corn J.E."/>
        </authorList>
    </citation>
    <scope>IDENTIFICATION IN THE SCF(FBXO31) UBIQUITIN LIGASE COMPLEX</scope>
</reference>
<reference evidence="30 31 32" key="28">
    <citation type="journal article" date="2000" name="Nature">
        <title>Insights into SCF ubiquitin ligases from the structure of the Skp1-Skp2 complex.</title>
        <authorList>
            <person name="Schulman B.A."/>
            <person name="Carrano A.C."/>
            <person name="Jeffrey P.D."/>
            <person name="Bowen Z."/>
            <person name="Kinnucan E.R.E."/>
            <person name="Finnin M.S."/>
            <person name="Elledge S.J."/>
            <person name="Harper J.W."/>
            <person name="Pagano M."/>
            <person name="Pavletich N.P."/>
        </authorList>
    </citation>
    <scope>X-RAY CRYSTALLOGRAPHY (1.8 ANGSTROMS) OF THE SKP1-SKP2 COMPLEX</scope>
</reference>
<reference evidence="33" key="29">
    <citation type="journal article" date="2002" name="Nature">
        <title>Structure of the Cul1-Rbx1-Skp1-F box Skp2 SCF ubiquitin ligase complex.</title>
        <authorList>
            <person name="Zheng N."/>
            <person name="Schulman B.A."/>
            <person name="Song L."/>
            <person name="Miller J.J."/>
            <person name="Jeffrey P.D."/>
            <person name="Wang P."/>
            <person name="Chu C."/>
            <person name="Koepp D.M."/>
            <person name="Elledge S.J."/>
            <person name="Pagano M."/>
            <person name="Conaway R.C."/>
            <person name="Conaway J.W."/>
            <person name="Harper J.W."/>
            <person name="Pavletich N.P."/>
        </authorList>
    </citation>
    <scope>X-RAY CRYSTALLOGRAPHY (3.0 ANGSTROMS) IN SCF COMPLEX WITH CUL1; RBX1 AND SKP2</scope>
</reference>
<reference evidence="34" key="30">
    <citation type="journal article" date="2003" name="Mol. Cell">
        <title>Structure of a beta-TrCP1-Skp1-beta-catenin complex: destruction motif binding and lysine specificity of the SCF(beta-TrCP1) ubiquitin ligase.</title>
        <authorList>
            <person name="Wu G."/>
            <person name="Xu G."/>
            <person name="Schulman B.A."/>
            <person name="Jeffrey P.D."/>
            <person name="Harper J.W."/>
            <person name="Pavletich N.P."/>
        </authorList>
    </citation>
    <scope>X-RAY CRYSTALLOGRAPHY (2.95 ANGSTROMS) IN COMPLEX WITH 176-606 OF BTRC AND CTNNB1</scope>
</reference>
<reference evidence="35 36" key="31">
    <citation type="journal article" date="2005" name="Mol. Cell">
        <title>Structural basis of the Cks1-dependent recognition of p27(Kip1) by the SCF(Skp2) ubiquitin ligase.</title>
        <authorList>
            <person name="Hao B."/>
            <person name="Zheng N."/>
            <person name="Schulman B.A."/>
            <person name="Wu G."/>
            <person name="Miller J.J."/>
            <person name="Pagano M."/>
            <person name="Pavletich N.P."/>
        </authorList>
    </citation>
    <scope>X-RAY CRYSTALLOGRAPHY (2.3 ANGSTROMS) OF 3-159 IN COMPLEX WITH SKP2; CKS1B AND CDKN1B PHOSPHOPEPTIDE</scope>
    <scope>SUBUNIT</scope>
    <scope>FUNCTION</scope>
</reference>
<reference evidence="39 40 41" key="32">
    <citation type="journal article" date="2007" name="Mol. Cell">
        <title>Structure of a Fbw7-Skp1-cyclin E complex: multisite-phosphorylated substrate recognition by SCF ubiquitin ligases.</title>
        <authorList>
            <person name="Hao B."/>
            <person name="Oehlmann S."/>
            <person name="Sowa M.E."/>
            <person name="Harper J.W."/>
            <person name="Pavletich N.P."/>
        </authorList>
    </citation>
    <scope>X-RAY CRYSTALLOGRAPHY (2.5 ANGSTROMS) IN COMPLEX WITH FBXW7 AND CCNE1 PEPTIDE</scope>
</reference>
<reference evidence="37 38" key="33">
    <citation type="journal article" date="2007" name="Proc. Natl. Acad. Sci. U.S.A.">
        <title>Structural basis for the selection of glycosylated substrates by SCF(Fbs1) ubiquitin ligase.</title>
        <authorList>
            <person name="Mizushima T."/>
            <person name="Yoshida Y."/>
            <person name="Kumanomidou T."/>
            <person name="Hasegawa Y."/>
            <person name="Suzuki A."/>
            <person name="Yamane T."/>
            <person name="Tanaka K."/>
        </authorList>
    </citation>
    <scope>X-RAY CRYSTALLOGRAPHY (2.4 ANGSTROMS) IN COMPLEX WITH FBXO2</scope>
</reference>
<reference evidence="42" key="34">
    <citation type="journal article" date="2010" name="J. Biol. Chem.">
        <title>Structural basis of dimerization-dependent ubiquitination by the SCF(Fbx4) ubiquitin ligase.</title>
        <authorList>
            <person name="Li Y."/>
            <person name="Hao B."/>
        </authorList>
    </citation>
    <scope>X-RAY CRYSTALLOGRAPHY (2.8 ANGSTROMS) IN COMPLEX WITH FBXO4</scope>
    <scope>FUNCTION</scope>
</reference>
<reference evidence="43" key="35">
    <citation type="journal article" date="2016" name="Structure">
        <title>KDM2B Recruitment of the Polycomb Group Complex, PRC1.1, Requires Cooperation between PCGF1 and BCORL1.</title>
        <authorList>
            <person name="Wong S.J."/>
            <person name="Gearhart M.D."/>
            <person name="Taylor A.B."/>
            <person name="Nanyes D.R."/>
            <person name="Ha D.J."/>
            <person name="Robinson A.K."/>
            <person name="Artigas J.A."/>
            <person name="Lee O.J."/>
            <person name="Demeler B."/>
            <person name="Hart P.J."/>
            <person name="Bardwell V.J."/>
            <person name="Kim C.A."/>
        </authorList>
    </citation>
    <scope>X-RAY CRYSTALLOGRAPHY (2.55 ANGSTROMS) OF 2-163</scope>
    <scope>SUBUNIT</scope>
</reference>
<reference evidence="44" key="36">
    <citation type="journal article" date="2018" name="Mol. Psychiatry">
        <title>FBXW7 regulates DISC1 stability via the ubiquitin-proteosome system.</title>
        <authorList>
            <person name="Yalla K."/>
            <person name="Elliott C."/>
            <person name="Day J.P."/>
            <person name="Findlay J."/>
            <person name="Barratt S."/>
            <person name="Hughes Z.A."/>
            <person name="Wilson L."/>
            <person name="Whiteley E."/>
            <person name="Popiolek M."/>
            <person name="Li Y."/>
            <person name="Dunlop J."/>
            <person name="Killick R."/>
            <person name="Adams D.R."/>
            <person name="Brandon N.J."/>
            <person name="Houslay M.D."/>
            <person name="Hao B."/>
            <person name="Baillie G.S."/>
        </authorList>
    </citation>
    <scope>X-RAY CRYSTALLOGRAPHY (2.60 ANGSTROMS) IN COMPLEX WITH FBXW7</scope>
    <scope>FUNCTION</scope>
</reference>
<reference evidence="45 46 47" key="37">
    <citation type="journal article" date="2018" name="Structure">
        <title>A Structure-Based Strategy for Engineering Selective Ubiquitin Variant Inhibitors of Skp1-Cul1-F-Box Ubiquitin Ligases.</title>
        <authorList>
            <person name="Gorelik M."/>
            <person name="Manczyk N."/>
            <person name="Pavlenco A."/>
            <person name="Kurinov I."/>
            <person name="Sidhu S.S."/>
            <person name="Sicheri F."/>
        </authorList>
    </citation>
    <scope>X-RAY CRYSTALLOGRAPHY (2.61 ANGSTROMS) IN COMPLEX WITH KDM2A; KDM2B AND UBB</scope>
    <scope>INTERACTION OF SKP1-KDM2A AND SKP1-KDM2B COMPLEXES WITH UBB</scope>
</reference>
<reference evidence="48" key="38">
    <citation type="journal article" date="2022" name="Nat. Struct. Mol. Biol.">
        <title>Structure of CRL7FBXW8 reveals coupling with CUL1-RBX1/ROC1 for multi-cullin-RING E3-catalyzed ubiquitin ligation.</title>
        <authorList>
            <person name="Hopf L.V.M."/>
            <person name="Baek K."/>
            <person name="Kluegel M."/>
            <person name="von Gronau S."/>
            <person name="Xiong Y."/>
            <person name="Schulman B.A."/>
        </authorList>
    </citation>
    <scope>STRUCTURE BY ELECTRON MICROSCOPY (2.80 ANGSTROMS) IN CUL7-RING(FBXW8) COMPLEX</scope>
    <scope>FUNCTION</scope>
    <scope>SUBUNIT</scope>
    <scope>INTERACTION WITH FBXW8</scope>
</reference>
<evidence type="ECO:0000250" key="1">
    <source>
        <dbReference type="UniProtKB" id="Q9WTX5"/>
    </source>
</evidence>
<evidence type="ECO:0000256" key="2">
    <source>
        <dbReference type="SAM" id="MobiDB-lite"/>
    </source>
</evidence>
<evidence type="ECO:0000269" key="3">
    <source>
    </source>
</evidence>
<evidence type="ECO:0000269" key="4">
    <source>
    </source>
</evidence>
<evidence type="ECO:0000269" key="5">
    <source>
    </source>
</evidence>
<evidence type="ECO:0000269" key="6">
    <source>
    </source>
</evidence>
<evidence type="ECO:0000269" key="7">
    <source>
    </source>
</evidence>
<evidence type="ECO:0000269" key="8">
    <source>
    </source>
</evidence>
<evidence type="ECO:0000269" key="9">
    <source>
    </source>
</evidence>
<evidence type="ECO:0000269" key="10">
    <source>
    </source>
</evidence>
<evidence type="ECO:0000269" key="11">
    <source>
    </source>
</evidence>
<evidence type="ECO:0000269" key="12">
    <source>
    </source>
</evidence>
<evidence type="ECO:0000269" key="13">
    <source>
    </source>
</evidence>
<evidence type="ECO:0000269" key="14">
    <source>
    </source>
</evidence>
<evidence type="ECO:0000269" key="15">
    <source>
    </source>
</evidence>
<evidence type="ECO:0000269" key="16">
    <source>
    </source>
</evidence>
<evidence type="ECO:0000269" key="17">
    <source>
    </source>
</evidence>
<evidence type="ECO:0000269" key="18">
    <source>
    </source>
</evidence>
<evidence type="ECO:0000269" key="19">
    <source>
    </source>
</evidence>
<evidence type="ECO:0000269" key="20">
    <source>
    </source>
</evidence>
<evidence type="ECO:0000269" key="21">
    <source>
    </source>
</evidence>
<evidence type="ECO:0000269" key="22">
    <source>
    </source>
</evidence>
<evidence type="ECO:0000269" key="23">
    <source>
    </source>
</evidence>
<evidence type="ECO:0000269" key="24">
    <source>
    </source>
</evidence>
<evidence type="ECO:0000269" key="25">
    <source>
    </source>
</evidence>
<evidence type="ECO:0000269" key="26">
    <source>
    </source>
</evidence>
<evidence type="ECO:0000269" key="27">
    <source ref="5"/>
</evidence>
<evidence type="ECO:0000303" key="28">
    <source>
    </source>
</evidence>
<evidence type="ECO:0000305" key="29"/>
<evidence type="ECO:0007744" key="30">
    <source>
        <dbReference type="PDB" id="1FQV"/>
    </source>
</evidence>
<evidence type="ECO:0007744" key="31">
    <source>
        <dbReference type="PDB" id="1FS1"/>
    </source>
</evidence>
<evidence type="ECO:0007744" key="32">
    <source>
        <dbReference type="PDB" id="1FS2"/>
    </source>
</evidence>
<evidence type="ECO:0007744" key="33">
    <source>
        <dbReference type="PDB" id="1LDK"/>
    </source>
</evidence>
<evidence type="ECO:0007744" key="34">
    <source>
        <dbReference type="PDB" id="1P22"/>
    </source>
</evidence>
<evidence type="ECO:0007744" key="35">
    <source>
        <dbReference type="PDB" id="2ASS"/>
    </source>
</evidence>
<evidence type="ECO:0007744" key="36">
    <source>
        <dbReference type="PDB" id="2AST"/>
    </source>
</evidence>
<evidence type="ECO:0007744" key="37">
    <source>
        <dbReference type="PDB" id="2E31"/>
    </source>
</evidence>
<evidence type="ECO:0007744" key="38">
    <source>
        <dbReference type="PDB" id="2E32"/>
    </source>
</evidence>
<evidence type="ECO:0007744" key="39">
    <source>
        <dbReference type="PDB" id="2OVP"/>
    </source>
</evidence>
<evidence type="ECO:0007744" key="40">
    <source>
        <dbReference type="PDB" id="2OVQ"/>
    </source>
</evidence>
<evidence type="ECO:0007744" key="41">
    <source>
        <dbReference type="PDB" id="2OVR"/>
    </source>
</evidence>
<evidence type="ECO:0007744" key="42">
    <source>
        <dbReference type="PDB" id="3L2O"/>
    </source>
</evidence>
<evidence type="ECO:0007744" key="43">
    <source>
        <dbReference type="PDB" id="5JH5"/>
    </source>
</evidence>
<evidence type="ECO:0007744" key="44">
    <source>
        <dbReference type="PDB" id="5V4B"/>
    </source>
</evidence>
<evidence type="ECO:0007744" key="45">
    <source>
        <dbReference type="PDB" id="6BVA"/>
    </source>
</evidence>
<evidence type="ECO:0007744" key="46">
    <source>
        <dbReference type="PDB" id="6BYH"/>
    </source>
</evidence>
<evidence type="ECO:0007744" key="47">
    <source>
        <dbReference type="PDB" id="6C16"/>
    </source>
</evidence>
<evidence type="ECO:0007744" key="48">
    <source>
        <dbReference type="PDB" id="7Z8B"/>
    </source>
</evidence>
<evidence type="ECO:0007744" key="49">
    <source>
    </source>
</evidence>
<evidence type="ECO:0007744" key="50">
    <source>
    </source>
</evidence>
<evidence type="ECO:0007744" key="51">
    <source>
    </source>
</evidence>
<evidence type="ECO:0007829" key="52">
    <source>
        <dbReference type="PDB" id="1FQV"/>
    </source>
</evidence>
<evidence type="ECO:0007829" key="53">
    <source>
        <dbReference type="PDB" id="1FS1"/>
    </source>
</evidence>
<evidence type="ECO:0007829" key="54">
    <source>
        <dbReference type="PDB" id="1LDK"/>
    </source>
</evidence>
<evidence type="ECO:0007829" key="55">
    <source>
        <dbReference type="PDB" id="2AST"/>
    </source>
</evidence>
<evidence type="ECO:0007829" key="56">
    <source>
        <dbReference type="PDB" id="5XYL"/>
    </source>
</evidence>
<evidence type="ECO:0007829" key="57">
    <source>
        <dbReference type="PDB" id="6M90"/>
    </source>
</evidence>
<evidence type="ECO:0007829" key="58">
    <source>
        <dbReference type="PDB" id="6O60"/>
    </source>
</evidence>
<evidence type="ECO:0007829" key="59">
    <source>
        <dbReference type="PDB" id="6WNX"/>
    </source>
</evidence>
<evidence type="ECO:0007829" key="60">
    <source>
        <dbReference type="PDB" id="8BYL"/>
    </source>
</evidence>